<comment type="function">
    <text>Binds as a heterodimer with protein bS6 to the central domain of the 16S rRNA, where it helps stabilize the platform of the 30S subunit.</text>
</comment>
<comment type="subunit">
    <text evidence="1 2 3 4 5 6 7">Part of the 30S ribosomal subunit (PubMed:10094780, PubMed:12244297, PubMed:12809609, PubMed:16272117, PubMed:27906160, PubMed:27906161, PubMed:27934701, PubMed:7556101, PubMed:776663). Forms a tight heterodimer with protein bS6.</text>
</comment>
<comment type="interaction">
    <interactant intactId="EBI-548844">
        <id>P0A7T7</id>
    </interactant>
    <interactant intactId="EBI-543068">
        <id>P02358</id>
        <label>rpsF</label>
    </interactant>
    <organismsDiffer>false</organismsDiffer>
    <experiments>4</experiments>
</comment>
<comment type="mass spectrometry"/>
<comment type="similarity">
    <text evidence="9">Belongs to the bacterial ribosomal protein bS18 family.</text>
</comment>
<reference key="1">
    <citation type="journal article" date="1986" name="Mol. Gen. Genet.">
        <title>The nucleotide sequence of an Escherichia coli chromosomal region containing the genes for ribosomal proteins S6, S18, L9 and an open reading frame.</title>
        <authorList>
            <person name="Schnier J."/>
            <person name="Kitakawa M."/>
            <person name="Isono K."/>
        </authorList>
    </citation>
    <scope>NUCLEOTIDE SEQUENCE [GENOMIC DNA]</scope>
</reference>
<reference key="2">
    <citation type="journal article" date="1995" name="Nucleic Acids Res.">
        <title>Analysis of the Escherichia coli genome VI: DNA sequence of the region from 92.8 through 100 minutes.</title>
        <authorList>
            <person name="Burland V.D."/>
            <person name="Plunkett G. III"/>
            <person name="Sofia H.J."/>
            <person name="Daniels D.L."/>
            <person name="Blattner F.R."/>
        </authorList>
    </citation>
    <scope>NUCLEOTIDE SEQUENCE [LARGE SCALE GENOMIC DNA]</scope>
    <source>
        <strain>K12 / MG1655 / ATCC 47076</strain>
    </source>
</reference>
<reference key="3">
    <citation type="journal article" date="1997" name="Science">
        <title>The complete genome sequence of Escherichia coli K-12.</title>
        <authorList>
            <person name="Blattner F.R."/>
            <person name="Plunkett G. III"/>
            <person name="Bloch C.A."/>
            <person name="Perna N.T."/>
            <person name="Burland V."/>
            <person name="Riley M."/>
            <person name="Collado-Vides J."/>
            <person name="Glasner J.D."/>
            <person name="Rode C.K."/>
            <person name="Mayhew G.F."/>
            <person name="Gregor J."/>
            <person name="Davis N.W."/>
            <person name="Kirkpatrick H.A."/>
            <person name="Goeden M.A."/>
            <person name="Rose D.J."/>
            <person name="Mau B."/>
            <person name="Shao Y."/>
        </authorList>
    </citation>
    <scope>NUCLEOTIDE SEQUENCE [LARGE SCALE GENOMIC DNA]</scope>
    <source>
        <strain>K12 / MG1655 / ATCC 47076</strain>
    </source>
</reference>
<reference key="4">
    <citation type="journal article" date="2006" name="Mol. Syst. Biol.">
        <title>Highly accurate genome sequences of Escherichia coli K-12 strains MG1655 and W3110.</title>
        <authorList>
            <person name="Hayashi K."/>
            <person name="Morooka N."/>
            <person name="Yamamoto Y."/>
            <person name="Fujita K."/>
            <person name="Isono K."/>
            <person name="Choi S."/>
            <person name="Ohtsubo E."/>
            <person name="Baba T."/>
            <person name="Wanner B.L."/>
            <person name="Mori H."/>
            <person name="Horiuchi T."/>
        </authorList>
    </citation>
    <scope>NUCLEOTIDE SEQUENCE [LARGE SCALE GENOMIC DNA]</scope>
    <source>
        <strain>K12 / W3110 / ATCC 27325 / DSM 5911</strain>
    </source>
</reference>
<reference key="5">
    <citation type="journal article" date="1975" name="FEBS Lett.">
        <title>Primary structure of protein S18 from the small Escherichia coli ribosomal subunit.</title>
        <authorList>
            <person name="Yaguchi M."/>
        </authorList>
    </citation>
    <scope>PROTEIN SEQUENCE OF 2-75</scope>
    <scope>SUBUNIT</scope>
    <scope>ACETYLATION AT ALA-2</scope>
    <source>
        <strain>K</strain>
    </source>
</reference>
<reference key="6">
    <citation type="journal article" date="1995" name="EMBO J.">
        <title>Protein-rRNA binding features and their structural and functional implications in ribosomes as determined by cross-linking studies.</title>
        <authorList>
            <person name="Urlaub H."/>
            <person name="Kruft V."/>
            <person name="Bischof O."/>
            <person name="Mueller E.-C."/>
            <person name="Wittmann-Liebold B."/>
        </authorList>
    </citation>
    <scope>PROTEIN SEQUENCE OF 31-38</scope>
    <scope>SUBUNIT</scope>
    <scope>CROSS-LINKING TO RRNA</scope>
    <source>
        <strain>MRE-600</strain>
    </source>
</reference>
<reference key="7">
    <citation type="journal article" date="1999" name="Anal. Biochem.">
        <title>Observation of Escherichia coli ribosomal proteins and their posttranslational modifications by mass spectrometry.</title>
        <authorList>
            <person name="Arnold R.J."/>
            <person name="Reilly J.P."/>
        </authorList>
    </citation>
    <scope>MASS SPECTROMETRY</scope>
    <scope>SUBUNIT</scope>
    <source>
        <strain>K12 / ATCC 25404 / DSM 5698 / NCIMB 11290</strain>
    </source>
</reference>
<reference key="8">
    <citation type="journal article" date="2014" name="Curr. Opin. Struct. Biol.">
        <title>A new system for naming ribosomal proteins.</title>
        <authorList>
            <person name="Ban N."/>
            <person name="Beckmann R."/>
            <person name="Cate J.H.D."/>
            <person name="Dinman J.D."/>
            <person name="Dragon F."/>
            <person name="Ellis S.R."/>
            <person name="Lafontaine D.L.J."/>
            <person name="Lindahl L."/>
            <person name="Liljas A."/>
            <person name="Lipton J.M."/>
            <person name="McAlear M.A."/>
            <person name="Moore P.B."/>
            <person name="Noller H.F."/>
            <person name="Ortega J."/>
            <person name="Panse V.G."/>
            <person name="Ramakrishnan V."/>
            <person name="Spahn C.M.T."/>
            <person name="Steitz T.A."/>
            <person name="Tchorzewski M."/>
            <person name="Tollervey D."/>
            <person name="Warren A.J."/>
            <person name="Williamson J.R."/>
            <person name="Wilson D."/>
            <person name="Yonath A."/>
            <person name="Yusupov M."/>
        </authorList>
    </citation>
    <scope>NOMENCLATURE</scope>
</reference>
<reference key="9">
    <citation type="journal article" date="2002" name="Nat. Struct. Biol.">
        <title>All-atom homology model of the Escherichia coli 30S ribosomal subunit.</title>
        <authorList>
            <person name="Tung C.-S."/>
            <person name="Joseph S."/>
            <person name="Sanbonmatsu K.Y."/>
        </authorList>
    </citation>
    <scope>3D-STRUCTURE MODELING</scope>
    <scope>SUBUNIT</scope>
</reference>
<reference key="10">
    <citation type="journal article" date="2003" name="Cell">
        <title>Study of the structural dynamics of the E. coli 70S ribosome using real-space refinement.</title>
        <authorList>
            <person name="Gao H."/>
            <person name="Sengupta J."/>
            <person name="Valle M."/>
            <person name="Korostelev A."/>
            <person name="Eswar N."/>
            <person name="Stagg S.M."/>
            <person name="Van Roey P."/>
            <person name="Agrawal R.K."/>
            <person name="Harvey S.C."/>
            <person name="Sali A."/>
            <person name="Chapman M.S."/>
            <person name="Frank J."/>
        </authorList>
    </citation>
    <scope>STRUCTURE BY ELECTRON MICROSCOPY (11.50 ANGSTROMS)</scope>
    <scope>SUBUNIT</scope>
    <source>
        <strain>MRE-600</strain>
    </source>
</reference>
<reference key="11">
    <citation type="journal article" date="2005" name="Science">
        <title>Structures of the bacterial ribosome at 3.5 A resolution.</title>
        <authorList>
            <person name="Schuwirth B.S."/>
            <person name="Borovinskaya M.A."/>
            <person name="Hau C.W."/>
            <person name="Zhang W."/>
            <person name="Vila-Sanjurjo A."/>
            <person name="Holton J.M."/>
            <person name="Cate J.H.D."/>
        </authorList>
    </citation>
    <scope>X-RAY CRYSTALLOGRAPHY (3.46 ANGSTROMS) OF 2 DIFFERENT RIBOSOME STRUCTURES</scope>
    <scope>SUBUNIT</scope>
    <source>
        <strain>MRE-600</strain>
    </source>
</reference>
<reference key="12">
    <citation type="journal article" date="2017" name="Nature">
        <title>Mechanistic insights into the alternative translation termination by ArfA and RF2.</title>
        <authorList>
            <person name="Ma C."/>
            <person name="Kurita D."/>
            <person name="Li N."/>
            <person name="Chen Y."/>
            <person name="Himeno H."/>
            <person name="Gao N."/>
        </authorList>
    </citation>
    <scope>STRUCTURE BY ELECTRON MICROSCOPY (3.0 ANGSTROMS) OF 70S RIBOSOME IN COMPLEX WITH ARFA AND RF2</scope>
    <scope>SUBUNIT</scope>
</reference>
<reference key="13">
    <citation type="journal article" date="2017" name="Nature">
        <title>Structural basis for ArfA-RF2-mediated translation termination on mRNAs lacking stop codons.</title>
        <authorList>
            <person name="Huter P."/>
            <person name="Mueller C."/>
            <person name="Beckert B."/>
            <person name="Arenz S."/>
            <person name="Berninghausen O."/>
            <person name="Beckmann R."/>
            <person name="Wilson D.N."/>
        </authorList>
    </citation>
    <scope>STRUCTURE BY ELECTRON MICROSCOPY (3.1 ANGSTROMS) OF 70S RIBOSOME IN COMPLEX WITH ARFA AND RF2</scope>
    <scope>SUBUNIT</scope>
</reference>
<reference key="14">
    <citation type="journal article" date="2016" name="Science">
        <title>Translational termination without a stop codon.</title>
        <authorList>
            <person name="James N.R."/>
            <person name="Brown A."/>
            <person name="Gordiyenko Y."/>
            <person name="Ramakrishnan V."/>
        </authorList>
    </citation>
    <scope>STRUCTURE BY ELECTRON MICROSCOPY (2.97 ANGSTROMS) OF 70S RIBOSOME IN COMPLEX WITH ARFA AND RF2</scope>
    <scope>SUBUNIT</scope>
</reference>
<reference key="15">
    <citation type="journal article" date="2017" name="Nature">
        <title>Structural basis of co-translational quality control by ArfA and RF2 bound to ribosome.</title>
        <authorList>
            <person name="Zeng F."/>
            <person name="Chen Y."/>
            <person name="Remis J."/>
            <person name="Shekhar M."/>
            <person name="Phillips J.C."/>
            <person name="Tajkhorshid E."/>
            <person name="Jin H."/>
        </authorList>
    </citation>
    <scope>STRUCTURE BY ELECTRON MICROSCOPY (3.52 ANGSTROMS) OF 70S RIBOSOME IN COMPLEX WITH ARFA AND RF2</scope>
    <scope>SUBUNIT</scope>
</reference>
<keyword id="KW-0002">3D-structure</keyword>
<keyword id="KW-0007">Acetylation</keyword>
<keyword id="KW-0903">Direct protein sequencing</keyword>
<keyword id="KW-1185">Reference proteome</keyword>
<keyword id="KW-0687">Ribonucleoprotein</keyword>
<keyword id="KW-0689">Ribosomal protein</keyword>
<keyword id="KW-0694">RNA-binding</keyword>
<keyword id="KW-0699">rRNA-binding</keyword>
<protein>
    <recommendedName>
        <fullName evidence="8">Small ribosomal subunit protein bS18</fullName>
    </recommendedName>
    <alternativeName>
        <fullName>30S ribosomal protein S18</fullName>
    </alternativeName>
</protein>
<accession>P0A7T7</accession>
<accession>P02374</accession>
<accession>Q2M6A3</accession>
<sequence>MARYFRRRKFCRFTAEGVQEIDYKDIATLKNYITESGKIVPSRITGTRAKYQRQLARAIKRARYLSLLPYTDRHQ</sequence>
<proteinExistence type="evidence at protein level"/>
<evidence type="ECO:0000269" key="1">
    <source>
    </source>
</evidence>
<evidence type="ECO:0000269" key="2">
    <source>
    </source>
</evidence>
<evidence type="ECO:0000269" key="3">
    <source>
    </source>
</evidence>
<evidence type="ECO:0000269" key="4">
    <source>
    </source>
</evidence>
<evidence type="ECO:0000269" key="5">
    <source>
    </source>
</evidence>
<evidence type="ECO:0000269" key="6">
    <source>
    </source>
</evidence>
<evidence type="ECO:0000269" key="7">
    <source>
    </source>
</evidence>
<evidence type="ECO:0000303" key="8">
    <source>
    </source>
</evidence>
<evidence type="ECO:0000305" key="9"/>
<evidence type="ECO:0007829" key="10">
    <source>
        <dbReference type="PDB" id="8CGJ"/>
    </source>
</evidence>
<evidence type="ECO:0007829" key="11">
    <source>
        <dbReference type="PDB" id="9GUP"/>
    </source>
</evidence>
<gene>
    <name type="primary">rpsR</name>
    <name type="ordered locus">b4202</name>
    <name type="ordered locus">JW4160</name>
</gene>
<name>RS18_ECOLI</name>
<dbReference type="EMBL" id="X04022">
    <property type="protein sequence ID" value="CAA27654.1"/>
    <property type="molecule type" value="Genomic_DNA"/>
</dbReference>
<dbReference type="EMBL" id="U14003">
    <property type="protein sequence ID" value="AAA97098.1"/>
    <property type="molecule type" value="Genomic_DNA"/>
</dbReference>
<dbReference type="EMBL" id="U00096">
    <property type="protein sequence ID" value="AAC77159.1"/>
    <property type="molecule type" value="Genomic_DNA"/>
</dbReference>
<dbReference type="EMBL" id="AP009048">
    <property type="protein sequence ID" value="BAE78203.1"/>
    <property type="molecule type" value="Genomic_DNA"/>
</dbReference>
<dbReference type="PIR" id="S56427">
    <property type="entry name" value="R3EC18"/>
</dbReference>
<dbReference type="RefSeq" id="NP_418623.1">
    <property type="nucleotide sequence ID" value="NC_000913.3"/>
</dbReference>
<dbReference type="RefSeq" id="WP_000135199.1">
    <property type="nucleotide sequence ID" value="NZ_STEB01000013.1"/>
</dbReference>
<dbReference type="PDB" id="2YKR">
    <property type="method" value="EM"/>
    <property type="resolution" value="9.80 A"/>
    <property type="chains" value="R=20-74"/>
</dbReference>
<dbReference type="PDB" id="3IY8">
    <property type="method" value="EM"/>
    <property type="resolution" value="14.10 A"/>
    <property type="chains" value="R=20-74"/>
</dbReference>
<dbReference type="PDB" id="3J9Y">
    <property type="method" value="EM"/>
    <property type="resolution" value="3.90 A"/>
    <property type="chains" value="r=1-75"/>
</dbReference>
<dbReference type="PDB" id="3J9Z">
    <property type="method" value="EM"/>
    <property type="resolution" value="3.60 A"/>
    <property type="chains" value="SR=2-75"/>
</dbReference>
<dbReference type="PDB" id="3JA1">
    <property type="method" value="EM"/>
    <property type="resolution" value="3.60 A"/>
    <property type="chains" value="SR=2-75"/>
</dbReference>
<dbReference type="PDB" id="3JBU">
    <property type="method" value="EM"/>
    <property type="resolution" value="3.64 A"/>
    <property type="chains" value="R=1-75"/>
</dbReference>
<dbReference type="PDB" id="3JBV">
    <property type="method" value="EM"/>
    <property type="resolution" value="3.32 A"/>
    <property type="chains" value="R=1-75"/>
</dbReference>
<dbReference type="PDB" id="3JCD">
    <property type="method" value="EM"/>
    <property type="resolution" value="3.70 A"/>
    <property type="chains" value="r=1-75"/>
</dbReference>
<dbReference type="PDB" id="3JCE">
    <property type="method" value="EM"/>
    <property type="resolution" value="3.20 A"/>
    <property type="chains" value="r=1-75"/>
</dbReference>
<dbReference type="PDB" id="3JCJ">
    <property type="method" value="EM"/>
    <property type="resolution" value="3.70 A"/>
    <property type="chains" value="1=1-75"/>
</dbReference>
<dbReference type="PDB" id="3JCN">
    <property type="method" value="EM"/>
    <property type="resolution" value="4.60 A"/>
    <property type="chains" value="u=1-75"/>
</dbReference>
<dbReference type="PDB" id="4A2I">
    <property type="method" value="EM"/>
    <property type="resolution" value="16.50 A"/>
    <property type="chains" value="R=20-74"/>
</dbReference>
<dbReference type="PDB" id="4ADV">
    <property type="method" value="EM"/>
    <property type="resolution" value="13.50 A"/>
    <property type="chains" value="R=2-75"/>
</dbReference>
<dbReference type="PDB" id="4U1U">
    <property type="method" value="X-ray"/>
    <property type="resolution" value="2.95 A"/>
    <property type="chains" value="AR/CR=20-74"/>
</dbReference>
<dbReference type="PDB" id="4U1V">
    <property type="method" value="X-ray"/>
    <property type="resolution" value="3.00 A"/>
    <property type="chains" value="AR/CR=20-74"/>
</dbReference>
<dbReference type="PDB" id="4U20">
    <property type="method" value="X-ray"/>
    <property type="resolution" value="2.90 A"/>
    <property type="chains" value="AR/CR=20-74"/>
</dbReference>
<dbReference type="PDB" id="4U24">
    <property type="method" value="X-ray"/>
    <property type="resolution" value="2.90 A"/>
    <property type="chains" value="AR/CR=20-74"/>
</dbReference>
<dbReference type="PDB" id="4U25">
    <property type="method" value="X-ray"/>
    <property type="resolution" value="2.90 A"/>
    <property type="chains" value="AR/CR=20-74"/>
</dbReference>
<dbReference type="PDB" id="4U26">
    <property type="method" value="X-ray"/>
    <property type="resolution" value="2.80 A"/>
    <property type="chains" value="AR/CR=20-74"/>
</dbReference>
<dbReference type="PDB" id="4U27">
    <property type="method" value="X-ray"/>
    <property type="resolution" value="2.80 A"/>
    <property type="chains" value="AR/CR=20-74"/>
</dbReference>
<dbReference type="PDB" id="4V47">
    <property type="method" value="EM"/>
    <property type="resolution" value="12.30 A"/>
    <property type="chains" value="BR=2-75"/>
</dbReference>
<dbReference type="PDB" id="4V48">
    <property type="method" value="EM"/>
    <property type="resolution" value="11.50 A"/>
    <property type="chains" value="BR=2-75"/>
</dbReference>
<dbReference type="PDB" id="4V4H">
    <property type="method" value="X-ray"/>
    <property type="resolution" value="3.46 A"/>
    <property type="chains" value="AR/CR=1-75"/>
</dbReference>
<dbReference type="PDB" id="4V4Q">
    <property type="method" value="X-ray"/>
    <property type="resolution" value="3.46 A"/>
    <property type="chains" value="AR/CR=2-75"/>
</dbReference>
<dbReference type="PDB" id="4V4V">
    <property type="method" value="EM"/>
    <property type="resolution" value="15.00 A"/>
    <property type="chains" value="AR=7-75"/>
</dbReference>
<dbReference type="PDB" id="4V4W">
    <property type="method" value="EM"/>
    <property type="resolution" value="15.00 A"/>
    <property type="chains" value="AR=7-75"/>
</dbReference>
<dbReference type="PDB" id="4V50">
    <property type="method" value="X-ray"/>
    <property type="resolution" value="3.22 A"/>
    <property type="chains" value="AR/CR=2-75"/>
</dbReference>
<dbReference type="PDB" id="4V52">
    <property type="method" value="X-ray"/>
    <property type="resolution" value="3.21 A"/>
    <property type="chains" value="AR/CR=2-75"/>
</dbReference>
<dbReference type="PDB" id="4V53">
    <property type="method" value="X-ray"/>
    <property type="resolution" value="3.54 A"/>
    <property type="chains" value="AR/CR=2-75"/>
</dbReference>
<dbReference type="PDB" id="4V54">
    <property type="method" value="X-ray"/>
    <property type="resolution" value="3.30 A"/>
    <property type="chains" value="AR/CR=2-75"/>
</dbReference>
<dbReference type="PDB" id="4V55">
    <property type="method" value="X-ray"/>
    <property type="resolution" value="4.00 A"/>
    <property type="chains" value="AR/CR=2-75"/>
</dbReference>
<dbReference type="PDB" id="4V56">
    <property type="method" value="X-ray"/>
    <property type="resolution" value="3.93 A"/>
    <property type="chains" value="AR/CR=2-75"/>
</dbReference>
<dbReference type="PDB" id="4V57">
    <property type="method" value="X-ray"/>
    <property type="resolution" value="3.50 A"/>
    <property type="chains" value="AR/CR=2-75"/>
</dbReference>
<dbReference type="PDB" id="4V5B">
    <property type="method" value="X-ray"/>
    <property type="resolution" value="3.74 A"/>
    <property type="chains" value="BR/DR=2-75"/>
</dbReference>
<dbReference type="PDB" id="4V5H">
    <property type="method" value="EM"/>
    <property type="resolution" value="5.80 A"/>
    <property type="chains" value="AR=20-74"/>
</dbReference>
<dbReference type="PDB" id="4V5Y">
    <property type="method" value="X-ray"/>
    <property type="resolution" value="4.45 A"/>
    <property type="chains" value="AR/CR=2-75"/>
</dbReference>
<dbReference type="PDB" id="4V64">
    <property type="method" value="X-ray"/>
    <property type="resolution" value="3.50 A"/>
    <property type="chains" value="AR/CR=2-75"/>
</dbReference>
<dbReference type="PDB" id="4V65">
    <property type="method" value="EM"/>
    <property type="resolution" value="9.00 A"/>
    <property type="chains" value="AK=1-75"/>
</dbReference>
<dbReference type="PDB" id="4V66">
    <property type="method" value="EM"/>
    <property type="resolution" value="9.00 A"/>
    <property type="chains" value="AK=1-75"/>
</dbReference>
<dbReference type="PDB" id="4V69">
    <property type="method" value="EM"/>
    <property type="resolution" value="6.70 A"/>
    <property type="chains" value="AR=20-74"/>
</dbReference>
<dbReference type="PDB" id="4V6C">
    <property type="method" value="X-ray"/>
    <property type="resolution" value="3.19 A"/>
    <property type="chains" value="AR/CR=1-75"/>
</dbReference>
<dbReference type="PDB" id="4V6D">
    <property type="method" value="X-ray"/>
    <property type="resolution" value="3.81 A"/>
    <property type="chains" value="AR/CR=1-75"/>
</dbReference>
<dbReference type="PDB" id="4V6E">
    <property type="method" value="X-ray"/>
    <property type="resolution" value="3.71 A"/>
    <property type="chains" value="AR/CR=1-75"/>
</dbReference>
<dbReference type="PDB" id="4V6K">
    <property type="method" value="EM"/>
    <property type="resolution" value="8.25 A"/>
    <property type="chains" value="BV=1-75"/>
</dbReference>
<dbReference type="PDB" id="4V6L">
    <property type="method" value="EM"/>
    <property type="resolution" value="13.20 A"/>
    <property type="chains" value="AV=1-75"/>
</dbReference>
<dbReference type="PDB" id="4V6M">
    <property type="method" value="EM"/>
    <property type="resolution" value="7.10 A"/>
    <property type="chains" value="AR=2-75"/>
</dbReference>
<dbReference type="PDB" id="4V6N">
    <property type="method" value="EM"/>
    <property type="resolution" value="12.10 A"/>
    <property type="chains" value="BU=2-75"/>
</dbReference>
<dbReference type="PDB" id="4V6O">
    <property type="method" value="EM"/>
    <property type="resolution" value="14.70 A"/>
    <property type="chains" value="AU=2-75"/>
</dbReference>
<dbReference type="PDB" id="4V6P">
    <property type="method" value="EM"/>
    <property type="resolution" value="13.50 A"/>
    <property type="chains" value="AU=2-75"/>
</dbReference>
<dbReference type="PDB" id="4V6Q">
    <property type="method" value="EM"/>
    <property type="resolution" value="11.50 A"/>
    <property type="chains" value="AU=2-75"/>
</dbReference>
<dbReference type="PDB" id="4V6R">
    <property type="method" value="EM"/>
    <property type="resolution" value="11.50 A"/>
    <property type="chains" value="AU=2-75"/>
</dbReference>
<dbReference type="PDB" id="4V6S">
    <property type="method" value="EM"/>
    <property type="resolution" value="13.10 A"/>
    <property type="chains" value="BT=2-75"/>
</dbReference>
<dbReference type="PDB" id="4V6T">
    <property type="method" value="EM"/>
    <property type="resolution" value="8.30 A"/>
    <property type="chains" value="AR=20-74"/>
</dbReference>
<dbReference type="PDB" id="4V6V">
    <property type="method" value="EM"/>
    <property type="resolution" value="9.80 A"/>
    <property type="chains" value="AR=2-75"/>
</dbReference>
<dbReference type="PDB" id="4V6Y">
    <property type="method" value="EM"/>
    <property type="resolution" value="12.00 A"/>
    <property type="chains" value="AR=20-74"/>
</dbReference>
<dbReference type="PDB" id="4V6Z">
    <property type="method" value="EM"/>
    <property type="resolution" value="12.00 A"/>
    <property type="chains" value="AR=20-74"/>
</dbReference>
<dbReference type="PDB" id="4V70">
    <property type="method" value="EM"/>
    <property type="resolution" value="17.00 A"/>
    <property type="chains" value="AR=20-74"/>
</dbReference>
<dbReference type="PDB" id="4V71">
    <property type="method" value="EM"/>
    <property type="resolution" value="20.00 A"/>
    <property type="chains" value="AR=20-74"/>
</dbReference>
<dbReference type="PDB" id="4V72">
    <property type="method" value="EM"/>
    <property type="resolution" value="13.00 A"/>
    <property type="chains" value="AR=20-74"/>
</dbReference>
<dbReference type="PDB" id="4V73">
    <property type="method" value="EM"/>
    <property type="resolution" value="15.00 A"/>
    <property type="chains" value="AR=20-74"/>
</dbReference>
<dbReference type="PDB" id="4V74">
    <property type="method" value="EM"/>
    <property type="resolution" value="17.00 A"/>
    <property type="chains" value="AR=20-74"/>
</dbReference>
<dbReference type="PDB" id="4V75">
    <property type="method" value="EM"/>
    <property type="resolution" value="12.00 A"/>
    <property type="chains" value="AR=20-74"/>
</dbReference>
<dbReference type="PDB" id="4V76">
    <property type="method" value="EM"/>
    <property type="resolution" value="17.00 A"/>
    <property type="chains" value="AR=20-74"/>
</dbReference>
<dbReference type="PDB" id="4V77">
    <property type="method" value="EM"/>
    <property type="resolution" value="17.00 A"/>
    <property type="chains" value="AR=20-74"/>
</dbReference>
<dbReference type="PDB" id="4V78">
    <property type="method" value="EM"/>
    <property type="resolution" value="20.00 A"/>
    <property type="chains" value="AR=20-74"/>
</dbReference>
<dbReference type="PDB" id="4V79">
    <property type="method" value="EM"/>
    <property type="resolution" value="15.00 A"/>
    <property type="chains" value="AR=20-74"/>
</dbReference>
<dbReference type="PDB" id="4V7A">
    <property type="method" value="EM"/>
    <property type="resolution" value="9.00 A"/>
    <property type="chains" value="AR=20-74"/>
</dbReference>
<dbReference type="PDB" id="4V7B">
    <property type="method" value="EM"/>
    <property type="resolution" value="6.80 A"/>
    <property type="chains" value="AR=1-75"/>
</dbReference>
<dbReference type="PDB" id="4V7C">
    <property type="method" value="EM"/>
    <property type="resolution" value="7.60 A"/>
    <property type="chains" value="AR=2-75"/>
</dbReference>
<dbReference type="PDB" id="4V7D">
    <property type="method" value="EM"/>
    <property type="resolution" value="7.60 A"/>
    <property type="chains" value="BR=2-75"/>
</dbReference>
<dbReference type="PDB" id="4V7I">
    <property type="method" value="EM"/>
    <property type="resolution" value="9.60 A"/>
    <property type="chains" value="BR=1-75"/>
</dbReference>
<dbReference type="PDB" id="4V7S">
    <property type="method" value="X-ray"/>
    <property type="resolution" value="3.25 A"/>
    <property type="chains" value="AR/CR=20-74"/>
</dbReference>
<dbReference type="PDB" id="4V7T">
    <property type="method" value="X-ray"/>
    <property type="resolution" value="3.19 A"/>
    <property type="chains" value="AR/CR=20-74"/>
</dbReference>
<dbReference type="PDB" id="4V7U">
    <property type="method" value="X-ray"/>
    <property type="resolution" value="3.10 A"/>
    <property type="chains" value="AR/CR=20-74"/>
</dbReference>
<dbReference type="PDB" id="4V7V">
    <property type="method" value="X-ray"/>
    <property type="resolution" value="3.29 A"/>
    <property type="chains" value="AR/CR=20-74"/>
</dbReference>
<dbReference type="PDB" id="4V85">
    <property type="method" value="X-ray"/>
    <property type="resolution" value="3.20 A"/>
    <property type="chains" value="AR=1-75"/>
</dbReference>
<dbReference type="PDB" id="4V89">
    <property type="method" value="X-ray"/>
    <property type="resolution" value="3.70 A"/>
    <property type="chains" value="AR=1-75"/>
</dbReference>
<dbReference type="PDB" id="4V9C">
    <property type="method" value="X-ray"/>
    <property type="resolution" value="3.30 A"/>
    <property type="chains" value="AR/CR=1-75"/>
</dbReference>
<dbReference type="PDB" id="4V9D">
    <property type="method" value="X-ray"/>
    <property type="resolution" value="3.00 A"/>
    <property type="chains" value="AR/BR=20-74"/>
</dbReference>
<dbReference type="PDB" id="4V9O">
    <property type="method" value="X-ray"/>
    <property type="resolution" value="2.90 A"/>
    <property type="chains" value="BR/DR/FR/HR=1-75"/>
</dbReference>
<dbReference type="PDB" id="4V9P">
    <property type="method" value="X-ray"/>
    <property type="resolution" value="2.90 A"/>
    <property type="chains" value="BR/DR/FR/HR=1-75"/>
</dbReference>
<dbReference type="PDB" id="4WF1">
    <property type="method" value="X-ray"/>
    <property type="resolution" value="3.09 A"/>
    <property type="chains" value="AR/CR=20-74"/>
</dbReference>
<dbReference type="PDB" id="4WOI">
    <property type="method" value="X-ray"/>
    <property type="resolution" value="3.00 A"/>
    <property type="chains" value="AR/DR=1-75"/>
</dbReference>
<dbReference type="PDB" id="4WWW">
    <property type="method" value="X-ray"/>
    <property type="resolution" value="3.10 A"/>
    <property type="chains" value="QR/XR=20-74"/>
</dbReference>
<dbReference type="PDB" id="4YBB">
    <property type="method" value="X-ray"/>
    <property type="resolution" value="2.10 A"/>
    <property type="chains" value="AR/BR=20-74"/>
</dbReference>
<dbReference type="PDB" id="5AFI">
    <property type="method" value="EM"/>
    <property type="resolution" value="2.90 A"/>
    <property type="chains" value="r=1-75"/>
</dbReference>
<dbReference type="PDB" id="5H5U">
    <property type="method" value="EM"/>
    <property type="resolution" value="3.00 A"/>
    <property type="chains" value="y=2-75"/>
</dbReference>
<dbReference type="PDB" id="5IQR">
    <property type="method" value="EM"/>
    <property type="resolution" value="3.00 A"/>
    <property type="chains" value="w=1-75"/>
</dbReference>
<dbReference type="PDB" id="5IT8">
    <property type="method" value="X-ray"/>
    <property type="resolution" value="3.12 A"/>
    <property type="chains" value="AR/BR=20-74"/>
</dbReference>
<dbReference type="PDB" id="5J5B">
    <property type="method" value="X-ray"/>
    <property type="resolution" value="2.80 A"/>
    <property type="chains" value="AR/BR=20-74"/>
</dbReference>
<dbReference type="PDB" id="5J7L">
    <property type="method" value="X-ray"/>
    <property type="resolution" value="3.00 A"/>
    <property type="chains" value="AR/BR=20-74"/>
</dbReference>
<dbReference type="PDB" id="5J88">
    <property type="method" value="X-ray"/>
    <property type="resolution" value="3.32 A"/>
    <property type="chains" value="AR/BR=20-74"/>
</dbReference>
<dbReference type="PDB" id="5J8A">
    <property type="method" value="X-ray"/>
    <property type="resolution" value="3.10 A"/>
    <property type="chains" value="AR/BR=20-74"/>
</dbReference>
<dbReference type="PDB" id="5J91">
    <property type="method" value="X-ray"/>
    <property type="resolution" value="2.96 A"/>
    <property type="chains" value="AR/BR=20-74"/>
</dbReference>
<dbReference type="PDB" id="5JC9">
    <property type="method" value="X-ray"/>
    <property type="resolution" value="3.03 A"/>
    <property type="chains" value="AR/BR=20-74"/>
</dbReference>
<dbReference type="PDB" id="5JTE">
    <property type="method" value="EM"/>
    <property type="resolution" value="3.60 A"/>
    <property type="chains" value="AR=1-75"/>
</dbReference>
<dbReference type="PDB" id="5JU8">
    <property type="method" value="EM"/>
    <property type="resolution" value="3.60 A"/>
    <property type="chains" value="AR=1-75"/>
</dbReference>
<dbReference type="PDB" id="5KCR">
    <property type="method" value="EM"/>
    <property type="resolution" value="3.60 A"/>
    <property type="chains" value="1r=1-75"/>
</dbReference>
<dbReference type="PDB" id="5KCS">
    <property type="method" value="EM"/>
    <property type="resolution" value="3.90 A"/>
    <property type="chains" value="1r=1-75"/>
</dbReference>
<dbReference type="PDB" id="5KPS">
    <property type="method" value="EM"/>
    <property type="resolution" value="3.90 A"/>
    <property type="chains" value="23=1-75"/>
</dbReference>
<dbReference type="PDB" id="5KPV">
    <property type="method" value="EM"/>
    <property type="resolution" value="4.10 A"/>
    <property type="chains" value="22=1-75"/>
</dbReference>
<dbReference type="PDB" id="5KPW">
    <property type="method" value="EM"/>
    <property type="resolution" value="3.90 A"/>
    <property type="chains" value="22=1-75"/>
</dbReference>
<dbReference type="PDB" id="5KPX">
    <property type="method" value="EM"/>
    <property type="resolution" value="3.90 A"/>
    <property type="chains" value="22=1-75"/>
</dbReference>
<dbReference type="PDB" id="5L3P">
    <property type="method" value="EM"/>
    <property type="resolution" value="3.70 A"/>
    <property type="chains" value="r=1-75"/>
</dbReference>
<dbReference type="PDB" id="5LZA">
    <property type="method" value="EM"/>
    <property type="resolution" value="3.60 A"/>
    <property type="chains" value="r=10-74"/>
</dbReference>
<dbReference type="PDB" id="5LZB">
    <property type="method" value="EM"/>
    <property type="resolution" value="5.30 A"/>
    <property type="chains" value="r=10-74"/>
</dbReference>
<dbReference type="PDB" id="5LZC">
    <property type="method" value="EM"/>
    <property type="resolution" value="4.80 A"/>
    <property type="chains" value="r=10-74"/>
</dbReference>
<dbReference type="PDB" id="5LZD">
    <property type="method" value="EM"/>
    <property type="resolution" value="3.40 A"/>
    <property type="chains" value="r=10-74"/>
</dbReference>
<dbReference type="PDB" id="5LZE">
    <property type="method" value="EM"/>
    <property type="resolution" value="3.50 A"/>
    <property type="chains" value="r=10-74"/>
</dbReference>
<dbReference type="PDB" id="5LZF">
    <property type="method" value="EM"/>
    <property type="resolution" value="4.60 A"/>
    <property type="chains" value="r=10-74"/>
</dbReference>
<dbReference type="PDB" id="5MDV">
    <property type="method" value="EM"/>
    <property type="resolution" value="2.97 A"/>
    <property type="chains" value="w=1-75"/>
</dbReference>
<dbReference type="PDB" id="5MDW">
    <property type="method" value="EM"/>
    <property type="resolution" value="3.06 A"/>
    <property type="chains" value="w=1-75"/>
</dbReference>
<dbReference type="PDB" id="5MDY">
    <property type="method" value="EM"/>
    <property type="resolution" value="3.35 A"/>
    <property type="chains" value="w=1-75"/>
</dbReference>
<dbReference type="PDB" id="5MDZ">
    <property type="method" value="EM"/>
    <property type="resolution" value="3.10 A"/>
    <property type="chains" value="w=1-75"/>
</dbReference>
<dbReference type="PDB" id="5ME0">
    <property type="method" value="EM"/>
    <property type="resolution" value="13.50 A"/>
    <property type="chains" value="R=1-75"/>
</dbReference>
<dbReference type="PDB" id="5ME1">
    <property type="method" value="EM"/>
    <property type="resolution" value="13.50 A"/>
    <property type="chains" value="R=1-75"/>
</dbReference>
<dbReference type="PDB" id="5MGP">
    <property type="method" value="EM"/>
    <property type="resolution" value="3.10 A"/>
    <property type="chains" value="r=10-74"/>
</dbReference>
<dbReference type="PDB" id="5MY1">
    <property type="method" value="EM"/>
    <property type="resolution" value="7.60 A"/>
    <property type="chains" value="R=2-75"/>
</dbReference>
<dbReference type="PDB" id="5NO2">
    <property type="method" value="EM"/>
    <property type="resolution" value="5.16 A"/>
    <property type="chains" value="R=20-74"/>
</dbReference>
<dbReference type="PDB" id="5NO3">
    <property type="method" value="EM"/>
    <property type="resolution" value="5.16 A"/>
    <property type="chains" value="R=20-74"/>
</dbReference>
<dbReference type="PDB" id="5NO4">
    <property type="method" value="EM"/>
    <property type="resolution" value="5.16 A"/>
    <property type="chains" value="R=20-74"/>
</dbReference>
<dbReference type="PDB" id="5NP6">
    <property type="method" value="EM"/>
    <property type="resolution" value="3.60 A"/>
    <property type="chains" value="U=10-74"/>
</dbReference>
<dbReference type="PDB" id="5NWY">
    <property type="method" value="EM"/>
    <property type="resolution" value="2.93 A"/>
    <property type="chains" value="H=1-75"/>
</dbReference>
<dbReference type="PDB" id="5O2R">
    <property type="method" value="EM"/>
    <property type="resolution" value="3.40 A"/>
    <property type="chains" value="r=10-74"/>
</dbReference>
<dbReference type="PDB" id="5U4I">
    <property type="method" value="EM"/>
    <property type="resolution" value="3.50 A"/>
    <property type="chains" value="r=1-75"/>
</dbReference>
<dbReference type="PDB" id="5U9F">
    <property type="method" value="EM"/>
    <property type="resolution" value="3.20 A"/>
    <property type="chains" value="R=1-75"/>
</dbReference>
<dbReference type="PDB" id="5U9G">
    <property type="method" value="EM"/>
    <property type="resolution" value="3.20 A"/>
    <property type="chains" value="R=1-75"/>
</dbReference>
<dbReference type="PDB" id="5UYK">
    <property type="method" value="EM"/>
    <property type="resolution" value="3.90 A"/>
    <property type="chains" value="R=10-74"/>
</dbReference>
<dbReference type="PDB" id="5UYL">
    <property type="method" value="EM"/>
    <property type="resolution" value="3.60 A"/>
    <property type="chains" value="R=10-74"/>
</dbReference>
<dbReference type="PDB" id="5UYM">
    <property type="method" value="EM"/>
    <property type="resolution" value="3.20 A"/>
    <property type="chains" value="R=10-74"/>
</dbReference>
<dbReference type="PDB" id="5UYN">
    <property type="method" value="EM"/>
    <property type="resolution" value="4.00 A"/>
    <property type="chains" value="R=10-74"/>
</dbReference>
<dbReference type="PDB" id="5UYP">
    <property type="method" value="EM"/>
    <property type="resolution" value="3.90 A"/>
    <property type="chains" value="R=10-74"/>
</dbReference>
<dbReference type="PDB" id="5UYQ">
    <property type="method" value="EM"/>
    <property type="resolution" value="3.80 A"/>
    <property type="chains" value="R=10-74"/>
</dbReference>
<dbReference type="PDB" id="5UZ4">
    <property type="method" value="EM"/>
    <property type="resolution" value="5.80 A"/>
    <property type="chains" value="R=1-75"/>
</dbReference>
<dbReference type="PDB" id="5WDT">
    <property type="method" value="EM"/>
    <property type="resolution" value="3.00 A"/>
    <property type="chains" value="r=10-74"/>
</dbReference>
<dbReference type="PDB" id="5WE4">
    <property type="method" value="EM"/>
    <property type="resolution" value="3.10 A"/>
    <property type="chains" value="r=10-74"/>
</dbReference>
<dbReference type="PDB" id="5WE6">
    <property type="method" value="EM"/>
    <property type="resolution" value="3.40 A"/>
    <property type="chains" value="r=10-74"/>
</dbReference>
<dbReference type="PDB" id="5WF0">
    <property type="method" value="EM"/>
    <property type="resolution" value="3.60 A"/>
    <property type="chains" value="r=10-74"/>
</dbReference>
<dbReference type="PDB" id="5WFK">
    <property type="method" value="EM"/>
    <property type="resolution" value="3.40 A"/>
    <property type="chains" value="r=10-74"/>
</dbReference>
<dbReference type="PDB" id="5WFS">
    <property type="method" value="EM"/>
    <property type="resolution" value="3.00 A"/>
    <property type="chains" value="r=10-74"/>
</dbReference>
<dbReference type="PDB" id="6AWB">
    <property type="method" value="EM"/>
    <property type="resolution" value="6.70 A"/>
    <property type="chains" value="U=10-74"/>
</dbReference>
<dbReference type="PDB" id="6AWC">
    <property type="method" value="EM"/>
    <property type="resolution" value="7.90 A"/>
    <property type="chains" value="U=10-74"/>
</dbReference>
<dbReference type="PDB" id="6AWD">
    <property type="method" value="EM"/>
    <property type="resolution" value="8.10 A"/>
    <property type="chains" value="U=10-74"/>
</dbReference>
<dbReference type="PDB" id="6BU8">
    <property type="method" value="EM"/>
    <property type="resolution" value="3.50 A"/>
    <property type="chains" value="R=10-74"/>
</dbReference>
<dbReference type="PDB" id="6BY1">
    <property type="method" value="X-ray"/>
    <property type="resolution" value="3.94 A"/>
    <property type="chains" value="AR/BR=20-74"/>
</dbReference>
<dbReference type="PDB" id="6C4I">
    <property type="method" value="EM"/>
    <property type="resolution" value="3.24 A"/>
    <property type="chains" value="r=10-75"/>
</dbReference>
<dbReference type="PDB" id="6DNC">
    <property type="method" value="EM"/>
    <property type="resolution" value="3.70 A"/>
    <property type="chains" value="EB=1-75"/>
</dbReference>
<dbReference type="PDB" id="6ENF">
    <property type="method" value="EM"/>
    <property type="resolution" value="3.20 A"/>
    <property type="chains" value="r=10-74"/>
</dbReference>
<dbReference type="PDB" id="6ENJ">
    <property type="method" value="EM"/>
    <property type="resolution" value="3.70 A"/>
    <property type="chains" value="r=10-74"/>
</dbReference>
<dbReference type="PDB" id="6ENU">
    <property type="method" value="EM"/>
    <property type="resolution" value="3.10 A"/>
    <property type="chains" value="r=10-74"/>
</dbReference>
<dbReference type="PDB" id="6GWT">
    <property type="method" value="EM"/>
    <property type="resolution" value="3.80 A"/>
    <property type="chains" value="r=10-74"/>
</dbReference>
<dbReference type="PDB" id="6GXM">
    <property type="method" value="EM"/>
    <property type="resolution" value="3.80 A"/>
    <property type="chains" value="r=10-74"/>
</dbReference>
<dbReference type="PDB" id="6GXN">
    <property type="method" value="EM"/>
    <property type="resolution" value="3.90 A"/>
    <property type="chains" value="r=10-74"/>
</dbReference>
<dbReference type="PDB" id="6GXO">
    <property type="method" value="EM"/>
    <property type="resolution" value="3.90 A"/>
    <property type="chains" value="r=10-74"/>
</dbReference>
<dbReference type="PDB" id="6GXP">
    <property type="method" value="EM"/>
    <property type="resolution" value="4.40 A"/>
    <property type="chains" value="r=10-74"/>
</dbReference>
<dbReference type="PDB" id="6H4N">
    <property type="method" value="EM"/>
    <property type="resolution" value="3.00 A"/>
    <property type="chains" value="r=10-74"/>
</dbReference>
<dbReference type="PDB" id="6H58">
    <property type="method" value="EM"/>
    <property type="resolution" value="7.90 A"/>
    <property type="chains" value="r/rr=10-74"/>
</dbReference>
<dbReference type="PDB" id="6HRM">
    <property type="method" value="EM"/>
    <property type="resolution" value="2.96 A"/>
    <property type="chains" value="w=10-75"/>
</dbReference>
<dbReference type="PDB" id="6I7V">
    <property type="method" value="X-ray"/>
    <property type="resolution" value="2.90 A"/>
    <property type="chains" value="AR/BR=20-74"/>
</dbReference>
<dbReference type="PDB" id="6O7K">
    <property type="method" value="EM"/>
    <property type="resolution" value="4.20 A"/>
    <property type="chains" value="1=20-74"/>
</dbReference>
<dbReference type="PDB" id="6O9J">
    <property type="method" value="EM"/>
    <property type="resolution" value="3.90 A"/>
    <property type="chains" value="r=20-74"/>
</dbReference>
<dbReference type="PDB" id="6O9K">
    <property type="method" value="EM"/>
    <property type="resolution" value="4.00 A"/>
    <property type="chains" value="r=20-73"/>
</dbReference>
<dbReference type="PDB" id="6OFX">
    <property type="method" value="EM"/>
    <property type="resolution" value="3.30 A"/>
    <property type="chains" value="W=10-74"/>
</dbReference>
<dbReference type="PDB" id="6OG7">
    <property type="method" value="EM"/>
    <property type="resolution" value="3.30 A"/>
    <property type="chains" value="W=10-74"/>
</dbReference>
<dbReference type="PDB" id="6OGF">
    <property type="method" value="EM"/>
    <property type="resolution" value="3.90 A"/>
    <property type="chains" value="W=1-75"/>
</dbReference>
<dbReference type="PDB" id="6OGG">
    <property type="method" value="EM"/>
    <property type="resolution" value="4.20 A"/>
    <property type="chains" value="W=1-75"/>
</dbReference>
<dbReference type="PDB" id="6OGI">
    <property type="method" value="EM"/>
    <property type="resolution" value="3.40 A"/>
    <property type="chains" value="W=1-75"/>
</dbReference>
<dbReference type="PDB" id="6OM6">
    <property type="method" value="EM"/>
    <property type="resolution" value="3.10 A"/>
    <property type="chains" value="w=1-75"/>
</dbReference>
<dbReference type="PDB" id="6ORE">
    <property type="method" value="EM"/>
    <property type="resolution" value="2.90 A"/>
    <property type="chains" value="w=10-75"/>
</dbReference>
<dbReference type="PDB" id="6ORL">
    <property type="method" value="EM"/>
    <property type="resolution" value="3.50 A"/>
    <property type="chains" value="w=10-75"/>
</dbReference>
<dbReference type="PDB" id="6OSK">
    <property type="method" value="EM"/>
    <property type="resolution" value="3.60 A"/>
    <property type="chains" value="w=10-75"/>
</dbReference>
<dbReference type="PDB" id="6OSQ">
    <property type="method" value="EM"/>
    <property type="resolution" value="3.50 A"/>
    <property type="chains" value="w=10-75"/>
</dbReference>
<dbReference type="PDB" id="6OST">
    <property type="method" value="EM"/>
    <property type="resolution" value="4.20 A"/>
    <property type="chains" value="w=10-75"/>
</dbReference>
<dbReference type="PDB" id="6OT3">
    <property type="method" value="EM"/>
    <property type="resolution" value="3.90 A"/>
    <property type="chains" value="w=10-75"/>
</dbReference>
<dbReference type="PDB" id="6OUO">
    <property type="method" value="EM"/>
    <property type="resolution" value="3.70 A"/>
    <property type="chains" value="w=10-75"/>
</dbReference>
<dbReference type="PDB" id="6Q97">
    <property type="method" value="EM"/>
    <property type="resolution" value="3.90 A"/>
    <property type="chains" value="w=10-74"/>
</dbReference>
<dbReference type="PDB" id="6Q98">
    <property type="method" value="EM"/>
    <property type="resolution" value="4.30 A"/>
    <property type="chains" value="w=1-75"/>
</dbReference>
<dbReference type="PDB" id="6Q9A">
    <property type="method" value="EM"/>
    <property type="resolution" value="3.70 A"/>
    <property type="chains" value="w=10-75"/>
</dbReference>
<dbReference type="PDB" id="6SZS">
    <property type="method" value="EM"/>
    <property type="resolution" value="3.06 A"/>
    <property type="chains" value="r=1-75"/>
</dbReference>
<dbReference type="PDB" id="6TBV">
    <property type="method" value="EM"/>
    <property type="resolution" value="2.70 A"/>
    <property type="chains" value="S181=1-75"/>
</dbReference>
<dbReference type="PDB" id="6TC3">
    <property type="method" value="EM"/>
    <property type="resolution" value="2.70 A"/>
    <property type="chains" value="S181=1-75"/>
</dbReference>
<dbReference type="PDB" id="6VU3">
    <property type="method" value="EM"/>
    <property type="resolution" value="3.70 A"/>
    <property type="chains" value="C=10-75"/>
</dbReference>
<dbReference type="PDB" id="6VWL">
    <property type="method" value="EM"/>
    <property type="resolution" value="3.10 A"/>
    <property type="chains" value="q=1-75"/>
</dbReference>
<dbReference type="PDB" id="6VWM">
    <property type="method" value="EM"/>
    <property type="resolution" value="3.40 A"/>
    <property type="chains" value="q=1-75"/>
</dbReference>
<dbReference type="PDB" id="6VWN">
    <property type="method" value="EM"/>
    <property type="resolution" value="3.40 A"/>
    <property type="chains" value="q=1-75"/>
</dbReference>
<dbReference type="PDB" id="6VYQ">
    <property type="method" value="EM"/>
    <property type="resolution" value="3.70 A"/>
    <property type="chains" value="C=1-75"/>
</dbReference>
<dbReference type="PDB" id="6VYR">
    <property type="method" value="EM"/>
    <property type="resolution" value="3.80 A"/>
    <property type="chains" value="C=1-75"/>
</dbReference>
<dbReference type="PDB" id="6VYS">
    <property type="method" value="EM"/>
    <property type="resolution" value="3.70 A"/>
    <property type="chains" value="C=1-75"/>
</dbReference>
<dbReference type="PDB" id="6VYT">
    <property type="method" value="EM"/>
    <property type="resolution" value="14.00 A"/>
    <property type="chains" value="C=10-75"/>
</dbReference>
<dbReference type="PDB" id="6VYU">
    <property type="method" value="EM"/>
    <property type="resolution" value="7.00 A"/>
    <property type="chains" value="C=1-75"/>
</dbReference>
<dbReference type="PDB" id="6VYW">
    <property type="method" value="EM"/>
    <property type="resolution" value="7.00 A"/>
    <property type="chains" value="C=1-75"/>
</dbReference>
<dbReference type="PDB" id="6VYX">
    <property type="method" value="EM"/>
    <property type="resolution" value="9.90 A"/>
    <property type="chains" value="C=1-75"/>
</dbReference>
<dbReference type="PDB" id="6VYY">
    <property type="method" value="EM"/>
    <property type="resolution" value="9.90 A"/>
    <property type="chains" value="C=1-75"/>
</dbReference>
<dbReference type="PDB" id="6VYZ">
    <property type="method" value="EM"/>
    <property type="resolution" value="9.90 A"/>
    <property type="chains" value="C=1-75"/>
</dbReference>
<dbReference type="PDB" id="6VZ2">
    <property type="method" value="EM"/>
    <property type="resolution" value="10.00 A"/>
    <property type="chains" value="C=1-75"/>
</dbReference>
<dbReference type="PDB" id="6VZ3">
    <property type="method" value="EM"/>
    <property type="resolution" value="8.90 A"/>
    <property type="chains" value="C=10-75"/>
</dbReference>
<dbReference type="PDB" id="6VZ5">
    <property type="method" value="EM"/>
    <property type="resolution" value="8.90 A"/>
    <property type="chains" value="C=1-75"/>
</dbReference>
<dbReference type="PDB" id="6VZ7">
    <property type="method" value="EM"/>
    <property type="resolution" value="7.00 A"/>
    <property type="chains" value="C=10-75"/>
</dbReference>
<dbReference type="PDB" id="6VZJ">
    <property type="method" value="EM"/>
    <property type="resolution" value="4.10 A"/>
    <property type="chains" value="C=1-75"/>
</dbReference>
<dbReference type="PDB" id="6W6K">
    <property type="method" value="EM"/>
    <property type="resolution" value="3.60 A"/>
    <property type="chains" value="R=1-75"/>
</dbReference>
<dbReference type="PDB" id="6W77">
    <property type="method" value="EM"/>
    <property type="resolution" value="3.60 A"/>
    <property type="chains" value="R=1-75"/>
</dbReference>
<dbReference type="PDB" id="6W7M">
    <property type="method" value="EM"/>
    <property type="resolution" value="3.80 A"/>
    <property type="chains" value="R=1-75"/>
</dbReference>
<dbReference type="PDB" id="6WD0">
    <property type="method" value="EM"/>
    <property type="resolution" value="3.00 A"/>
    <property type="chains" value="W=10-74"/>
</dbReference>
<dbReference type="PDB" id="6WD1">
    <property type="method" value="EM"/>
    <property type="resolution" value="3.30 A"/>
    <property type="chains" value="W=10-74"/>
</dbReference>
<dbReference type="PDB" id="6WD2">
    <property type="method" value="EM"/>
    <property type="resolution" value="3.60 A"/>
    <property type="chains" value="W=10-74"/>
</dbReference>
<dbReference type="PDB" id="6WD3">
    <property type="method" value="EM"/>
    <property type="resolution" value="3.60 A"/>
    <property type="chains" value="W=10-74"/>
</dbReference>
<dbReference type="PDB" id="6WD4">
    <property type="method" value="EM"/>
    <property type="resolution" value="3.70 A"/>
    <property type="chains" value="W=10-74"/>
</dbReference>
<dbReference type="PDB" id="6WD5">
    <property type="method" value="EM"/>
    <property type="resolution" value="3.60 A"/>
    <property type="chains" value="W=10-74"/>
</dbReference>
<dbReference type="PDB" id="6WD6">
    <property type="method" value="EM"/>
    <property type="resolution" value="3.70 A"/>
    <property type="chains" value="W=10-74"/>
</dbReference>
<dbReference type="PDB" id="6WD7">
    <property type="method" value="EM"/>
    <property type="resolution" value="3.90 A"/>
    <property type="chains" value="W=10-74"/>
</dbReference>
<dbReference type="PDB" id="6WD8">
    <property type="method" value="EM"/>
    <property type="resolution" value="3.70 A"/>
    <property type="chains" value="W=10-74"/>
</dbReference>
<dbReference type="PDB" id="6WD9">
    <property type="method" value="EM"/>
    <property type="resolution" value="3.70 A"/>
    <property type="chains" value="W=10-74"/>
</dbReference>
<dbReference type="PDB" id="6WDA">
    <property type="method" value="EM"/>
    <property type="resolution" value="3.80 A"/>
    <property type="chains" value="W=10-74"/>
</dbReference>
<dbReference type="PDB" id="6WDB">
    <property type="method" value="EM"/>
    <property type="resolution" value="4.00 A"/>
    <property type="chains" value="W=10-74"/>
</dbReference>
<dbReference type="PDB" id="6WDC">
    <property type="method" value="EM"/>
    <property type="resolution" value="4.20 A"/>
    <property type="chains" value="W=10-74"/>
</dbReference>
<dbReference type="PDB" id="6WDD">
    <property type="method" value="EM"/>
    <property type="resolution" value="3.20 A"/>
    <property type="chains" value="W=10-74"/>
</dbReference>
<dbReference type="PDB" id="6WDE">
    <property type="method" value="EM"/>
    <property type="resolution" value="3.00 A"/>
    <property type="chains" value="W=10-74"/>
</dbReference>
<dbReference type="PDB" id="6WDF">
    <property type="method" value="EM"/>
    <property type="resolution" value="3.30 A"/>
    <property type="chains" value="W=10-74"/>
</dbReference>
<dbReference type="PDB" id="6WDG">
    <property type="method" value="EM"/>
    <property type="resolution" value="3.30 A"/>
    <property type="chains" value="W=10-74"/>
</dbReference>
<dbReference type="PDB" id="6WDH">
    <property type="method" value="EM"/>
    <property type="resolution" value="4.30 A"/>
    <property type="chains" value="W=10-74"/>
</dbReference>
<dbReference type="PDB" id="6WDI">
    <property type="method" value="EM"/>
    <property type="resolution" value="4.00 A"/>
    <property type="chains" value="W=10-74"/>
</dbReference>
<dbReference type="PDB" id="6WDJ">
    <property type="method" value="EM"/>
    <property type="resolution" value="3.70 A"/>
    <property type="chains" value="W=10-74"/>
</dbReference>
<dbReference type="PDB" id="6WDK">
    <property type="method" value="EM"/>
    <property type="resolution" value="3.60 A"/>
    <property type="chains" value="W=10-74"/>
</dbReference>
<dbReference type="PDB" id="6WDL">
    <property type="method" value="EM"/>
    <property type="resolution" value="3.70 A"/>
    <property type="chains" value="W=10-74"/>
</dbReference>
<dbReference type="PDB" id="6WDM">
    <property type="method" value="EM"/>
    <property type="resolution" value="3.60 A"/>
    <property type="chains" value="W=10-74"/>
</dbReference>
<dbReference type="PDB" id="6WNV">
    <property type="method" value="EM"/>
    <property type="resolution" value="3.50 A"/>
    <property type="chains" value="W=10-74"/>
</dbReference>
<dbReference type="PDB" id="6WNW">
    <property type="method" value="EM"/>
    <property type="resolution" value="3.20 A"/>
    <property type="chains" value="W=10-74"/>
</dbReference>
<dbReference type="PDB" id="6X6T">
    <property type="method" value="EM"/>
    <property type="resolution" value="3.20 A"/>
    <property type="chains" value="C=1-75"/>
</dbReference>
<dbReference type="PDB" id="6X7F">
    <property type="method" value="EM"/>
    <property type="resolution" value="3.50 A"/>
    <property type="chains" value="C=1-75"/>
</dbReference>
<dbReference type="PDB" id="6X7K">
    <property type="method" value="EM"/>
    <property type="resolution" value="3.10 A"/>
    <property type="chains" value="C=1-75"/>
</dbReference>
<dbReference type="PDB" id="6X9Q">
    <property type="method" value="EM"/>
    <property type="resolution" value="4.80 A"/>
    <property type="chains" value="C=1-75"/>
</dbReference>
<dbReference type="PDB" id="6XDQ">
    <property type="method" value="EM"/>
    <property type="resolution" value="3.70 A"/>
    <property type="chains" value="C=1-75"/>
</dbReference>
<dbReference type="PDB" id="6XDR">
    <property type="method" value="EM"/>
    <property type="resolution" value="4.70 A"/>
    <property type="chains" value="C=1-75"/>
</dbReference>
<dbReference type="PDB" id="6XE0">
    <property type="method" value="EM"/>
    <property type="resolution" value="6.80 A"/>
    <property type="chains" value="R=20-74"/>
</dbReference>
<dbReference type="PDB" id="6XGF">
    <property type="method" value="EM"/>
    <property type="resolution" value="5.00 A"/>
    <property type="chains" value="C=1-75"/>
</dbReference>
<dbReference type="PDB" id="6XII">
    <property type="method" value="EM"/>
    <property type="resolution" value="7.00 A"/>
    <property type="chains" value="C=1-75"/>
</dbReference>
<dbReference type="PDB" id="6XIJ">
    <property type="method" value="EM"/>
    <property type="resolution" value="8.00 A"/>
    <property type="chains" value="C=1-75"/>
</dbReference>
<dbReference type="PDB" id="6XZA">
    <property type="method" value="EM"/>
    <property type="resolution" value="2.66 A"/>
    <property type="chains" value="R1=20-74"/>
</dbReference>
<dbReference type="PDB" id="6XZB">
    <property type="method" value="EM"/>
    <property type="resolution" value="2.54 A"/>
    <property type="chains" value="R1=20-74"/>
</dbReference>
<dbReference type="PDB" id="6Y69">
    <property type="method" value="EM"/>
    <property type="resolution" value="2.86 A"/>
    <property type="chains" value="r=10-74"/>
</dbReference>
<dbReference type="PDB" id="6ZTJ">
    <property type="method" value="EM"/>
    <property type="resolution" value="3.40 A"/>
    <property type="chains" value="AR=1-75"/>
</dbReference>
<dbReference type="PDB" id="6ZTL">
    <property type="method" value="EM"/>
    <property type="resolution" value="3.50 A"/>
    <property type="chains" value="AR=1-75"/>
</dbReference>
<dbReference type="PDB" id="6ZTM">
    <property type="method" value="EM"/>
    <property type="resolution" value="3.30 A"/>
    <property type="chains" value="AR=1-75"/>
</dbReference>
<dbReference type="PDB" id="6ZTN">
    <property type="method" value="EM"/>
    <property type="resolution" value="3.90 A"/>
    <property type="chains" value="AR=1-75"/>
</dbReference>
<dbReference type="PDB" id="6ZTO">
    <property type="method" value="EM"/>
    <property type="resolution" value="3.00 A"/>
    <property type="chains" value="AR=1-75"/>
</dbReference>
<dbReference type="PDB" id="6ZTP">
    <property type="method" value="EM"/>
    <property type="resolution" value="3.00 A"/>
    <property type="chains" value="AR=1-75"/>
</dbReference>
<dbReference type="PDB" id="6ZU1">
    <property type="method" value="EM"/>
    <property type="resolution" value="3.00 A"/>
    <property type="chains" value="AR=1-75"/>
</dbReference>
<dbReference type="PDB" id="7ABZ">
    <property type="method" value="EM"/>
    <property type="resolution" value="3.21 A"/>
    <property type="chains" value="w=20-74"/>
</dbReference>
<dbReference type="PDB" id="7AC7">
    <property type="method" value="EM"/>
    <property type="resolution" value="3.08 A"/>
    <property type="chains" value="w=10-74"/>
</dbReference>
<dbReference type="PDB" id="7ACJ">
    <property type="method" value="EM"/>
    <property type="resolution" value="3.20 A"/>
    <property type="chains" value="w=9-75"/>
</dbReference>
<dbReference type="PDB" id="7ACR">
    <property type="method" value="EM"/>
    <property type="resolution" value="3.44 A"/>
    <property type="chains" value="w=9-75"/>
</dbReference>
<dbReference type="PDB" id="7AFI">
    <property type="method" value="EM"/>
    <property type="resolution" value="3.53 A"/>
    <property type="chains" value="R=1-75"/>
</dbReference>
<dbReference type="PDB" id="7AFL">
    <property type="method" value="EM"/>
    <property type="resolution" value="4.20 A"/>
    <property type="chains" value="R=1-75"/>
</dbReference>
<dbReference type="PDB" id="7AFO">
    <property type="method" value="EM"/>
    <property type="resolution" value="3.93 A"/>
    <property type="chains" value="R=1-75"/>
</dbReference>
<dbReference type="PDB" id="7B5K">
    <property type="method" value="EM"/>
    <property type="resolution" value="2.90 A"/>
    <property type="chains" value="r=20-74"/>
</dbReference>
<dbReference type="PDB" id="7BOD">
    <property type="method" value="EM"/>
    <property type="resolution" value="2.88 A"/>
    <property type="chains" value="R=1-75"/>
</dbReference>
<dbReference type="PDB" id="7BOE">
    <property type="method" value="EM"/>
    <property type="resolution" value="2.90 A"/>
    <property type="chains" value="R=1-75"/>
</dbReference>
<dbReference type="PDB" id="7BOF">
    <property type="method" value="EM"/>
    <property type="resolution" value="2.92 A"/>
    <property type="chains" value="R=1-75"/>
</dbReference>
<dbReference type="PDB" id="7BOG">
    <property type="method" value="EM"/>
    <property type="resolution" value="2.75 A"/>
    <property type="chains" value="R=1-75"/>
</dbReference>
<dbReference type="PDB" id="7BOH">
    <property type="method" value="EM"/>
    <property type="resolution" value="2.82 A"/>
    <property type="chains" value="R=1-75"/>
</dbReference>
<dbReference type="PDB" id="7BOI">
    <property type="method" value="EM"/>
    <property type="resolution" value="2.98 A"/>
    <property type="chains" value="R=1-75"/>
</dbReference>
<dbReference type="PDB" id="7D6Z">
    <property type="method" value="EM"/>
    <property type="resolution" value="3.40 A"/>
    <property type="chains" value="y=1-75"/>
</dbReference>
<dbReference type="PDB" id="7D80">
    <property type="method" value="EM"/>
    <property type="resolution" value="4.10 A"/>
    <property type="chains" value="S=1-75"/>
</dbReference>
<dbReference type="PDB" id="7JSS">
    <property type="method" value="EM"/>
    <property type="resolution" value="3.70 A"/>
    <property type="chains" value="W=10-74"/>
</dbReference>
<dbReference type="PDB" id="7JSW">
    <property type="method" value="EM"/>
    <property type="resolution" value="3.80 A"/>
    <property type="chains" value="W=10-74"/>
</dbReference>
<dbReference type="PDB" id="7JSZ">
    <property type="method" value="EM"/>
    <property type="resolution" value="3.70 A"/>
    <property type="chains" value="W=10-74"/>
</dbReference>
<dbReference type="PDB" id="7JT1">
    <property type="method" value="EM"/>
    <property type="resolution" value="3.30 A"/>
    <property type="chains" value="W=10-74"/>
</dbReference>
<dbReference type="PDB" id="7JT2">
    <property type="method" value="EM"/>
    <property type="resolution" value="3.50 A"/>
    <property type="chains" value="W=10-74"/>
</dbReference>
<dbReference type="PDB" id="7JT3">
    <property type="method" value="EM"/>
    <property type="resolution" value="3.70 A"/>
    <property type="chains" value="W=10-74"/>
</dbReference>
<dbReference type="PDB" id="7K00">
    <property type="method" value="EM"/>
    <property type="resolution" value="1.98 A"/>
    <property type="chains" value="R=1-75"/>
</dbReference>
<dbReference type="PDB" id="7K50">
    <property type="method" value="EM"/>
    <property type="resolution" value="3.40 A"/>
    <property type="chains" value="W=10-74"/>
</dbReference>
<dbReference type="PDB" id="7K51">
    <property type="method" value="EM"/>
    <property type="resolution" value="3.50 A"/>
    <property type="chains" value="W=10-74"/>
</dbReference>
<dbReference type="PDB" id="7K52">
    <property type="method" value="EM"/>
    <property type="resolution" value="3.40 A"/>
    <property type="chains" value="W=10-74"/>
</dbReference>
<dbReference type="PDB" id="7K53">
    <property type="method" value="EM"/>
    <property type="resolution" value="3.20 A"/>
    <property type="chains" value="W=10-74"/>
</dbReference>
<dbReference type="PDB" id="7K54">
    <property type="method" value="EM"/>
    <property type="resolution" value="3.20 A"/>
    <property type="chains" value="W=10-74"/>
</dbReference>
<dbReference type="PDB" id="7K55">
    <property type="method" value="EM"/>
    <property type="resolution" value="3.30 A"/>
    <property type="chains" value="W=10-74"/>
</dbReference>
<dbReference type="PDB" id="7LV0">
    <property type="method" value="EM"/>
    <property type="resolution" value="3.20 A"/>
    <property type="chains" value="W=10-74"/>
</dbReference>
<dbReference type="PDB" id="7M5D">
    <property type="method" value="EM"/>
    <property type="resolution" value="2.80 A"/>
    <property type="chains" value="w=10-75"/>
</dbReference>
<dbReference type="PDB" id="7N1P">
    <property type="method" value="EM"/>
    <property type="resolution" value="2.33 A"/>
    <property type="chains" value="SR=1-75"/>
</dbReference>
<dbReference type="PDB" id="7N2C">
    <property type="method" value="EM"/>
    <property type="resolution" value="2.72 A"/>
    <property type="chains" value="SR=1-75"/>
</dbReference>
<dbReference type="PDB" id="7N2U">
    <property type="method" value="EM"/>
    <property type="resolution" value="2.53 A"/>
    <property type="chains" value="SR=1-75"/>
</dbReference>
<dbReference type="PDB" id="7N2V">
    <property type="method" value="EM"/>
    <property type="resolution" value="2.54 A"/>
    <property type="chains" value="SR=1-75"/>
</dbReference>
<dbReference type="PDB" id="7N30">
    <property type="method" value="EM"/>
    <property type="resolution" value="2.66 A"/>
    <property type="chains" value="SR=1-75"/>
</dbReference>
<dbReference type="PDB" id="7N31">
    <property type="method" value="EM"/>
    <property type="resolution" value="2.69 A"/>
    <property type="chains" value="SR=1-75"/>
</dbReference>
<dbReference type="PDB" id="7NAR">
    <property type="method" value="EM"/>
    <property type="resolution" value="3.00 A"/>
    <property type="chains" value="R=1-75"/>
</dbReference>
<dbReference type="PDB" id="7NAS">
    <property type="method" value="EM"/>
    <property type="resolution" value="3.31 A"/>
    <property type="chains" value="R=1-75"/>
</dbReference>
<dbReference type="PDB" id="7NAT">
    <property type="method" value="EM"/>
    <property type="resolution" value="3.59 A"/>
    <property type="chains" value="R=1-75"/>
</dbReference>
<dbReference type="PDB" id="7NAU">
    <property type="method" value="EM"/>
    <property type="resolution" value="3.78 A"/>
    <property type="chains" value="R=1-75"/>
</dbReference>
<dbReference type="PDB" id="7NAV">
    <property type="method" value="EM"/>
    <property type="resolution" value="4.80 A"/>
    <property type="chains" value="R=1-75"/>
</dbReference>
<dbReference type="PDB" id="7NAX">
    <property type="method" value="EM"/>
    <property type="resolution" value="2.96 A"/>
    <property type="chains" value="R=1-75"/>
</dbReference>
<dbReference type="PDB" id="7NBU">
    <property type="method" value="EM"/>
    <property type="resolution" value="3.11 A"/>
    <property type="chains" value="R=9-74"/>
</dbReference>
<dbReference type="PDB" id="7O19">
    <property type="method" value="EM"/>
    <property type="resolution" value="2.90 A"/>
    <property type="chains" value="AR=1-75"/>
</dbReference>
<dbReference type="PDB" id="7O1A">
    <property type="method" value="EM"/>
    <property type="resolution" value="2.40 A"/>
    <property type="chains" value="AR=1-75"/>
</dbReference>
<dbReference type="PDB" id="7O1C">
    <property type="method" value="EM"/>
    <property type="resolution" value="2.60 A"/>
    <property type="chains" value="AR=1-75"/>
</dbReference>
<dbReference type="PDB" id="7O5H">
    <property type="method" value="EM"/>
    <property type="resolution" value="3.10 A"/>
    <property type="chains" value="R=20-74"/>
</dbReference>
<dbReference type="PDB" id="7OE0">
    <property type="method" value="EM"/>
    <property type="resolution" value="2.69 A"/>
    <property type="chains" value="R=2-75"/>
</dbReference>
<dbReference type="PDB" id="7OE1">
    <property type="method" value="EM"/>
    <property type="resolution" value="3.05 A"/>
    <property type="chains" value="R=2-75"/>
</dbReference>
<dbReference type="PDB" id="7OI0">
    <property type="method" value="EM"/>
    <property type="resolution" value="2.76 A"/>
    <property type="chains" value="R=2-75"/>
</dbReference>
<dbReference type="PDB" id="7OIZ">
    <property type="method" value="EM"/>
    <property type="resolution" value="2.90 A"/>
    <property type="chains" value="R=1-75"/>
</dbReference>
<dbReference type="PDB" id="7OJ0">
    <property type="method" value="EM"/>
    <property type="resolution" value="3.50 A"/>
    <property type="chains" value="R=1-75"/>
</dbReference>
<dbReference type="PDB" id="7P3K">
    <property type="method" value="EM"/>
    <property type="resolution" value="2.90 A"/>
    <property type="chains" value="R=1-75"/>
</dbReference>
<dbReference type="PDB" id="7PJU">
    <property type="method" value="EM"/>
    <property type="resolution" value="9.50 A"/>
    <property type="chains" value="r=1-75"/>
</dbReference>
<dbReference type="PDB" id="7PJY">
    <property type="method" value="EM"/>
    <property type="resolution" value="3.10 A"/>
    <property type="chains" value="r=1-75"/>
</dbReference>
<dbReference type="PDB" id="7QG8">
    <property type="method" value="EM"/>
    <property type="resolution" value="3.97 A"/>
    <property type="chains" value="K=1-75"/>
</dbReference>
<dbReference type="PDB" id="7QGH">
    <property type="method" value="EM"/>
    <property type="resolution" value="4.48 A"/>
    <property type="chains" value="I=1-75"/>
</dbReference>
<dbReference type="PDB" id="7S1G">
    <property type="method" value="EM"/>
    <property type="resolution" value="2.48 A"/>
    <property type="chains" value="z=1-75"/>
</dbReference>
<dbReference type="PDB" id="7S1H">
    <property type="method" value="EM"/>
    <property type="resolution" value="2.35 A"/>
    <property type="chains" value="z=1-75"/>
</dbReference>
<dbReference type="PDB" id="7S1I">
    <property type="method" value="EM"/>
    <property type="resolution" value="2.48 A"/>
    <property type="chains" value="z=1-75"/>
</dbReference>
<dbReference type="PDB" id="7S1J">
    <property type="method" value="EM"/>
    <property type="resolution" value="2.47 A"/>
    <property type="chains" value="z=1-75"/>
</dbReference>
<dbReference type="PDB" id="7S1K">
    <property type="method" value="EM"/>
    <property type="resolution" value="2.42 A"/>
    <property type="chains" value="z=1-75"/>
</dbReference>
<dbReference type="PDB" id="7SA4">
    <property type="method" value="EM"/>
    <property type="resolution" value="2.55 A"/>
    <property type="chains" value="w=1-75"/>
</dbReference>
<dbReference type="PDB" id="7SS9">
    <property type="method" value="EM"/>
    <property type="resolution" value="3.90 A"/>
    <property type="chains" value="W=10-74"/>
</dbReference>
<dbReference type="PDB" id="7SSD">
    <property type="method" value="EM"/>
    <property type="resolution" value="3.30 A"/>
    <property type="chains" value="W=10-74"/>
</dbReference>
<dbReference type="PDB" id="7SSL">
    <property type="method" value="EM"/>
    <property type="resolution" value="3.80 A"/>
    <property type="chains" value="W=10-74"/>
</dbReference>
<dbReference type="PDB" id="7SSN">
    <property type="method" value="EM"/>
    <property type="resolution" value="3.20 A"/>
    <property type="chains" value="W=10-74"/>
</dbReference>
<dbReference type="PDB" id="7SSO">
    <property type="method" value="EM"/>
    <property type="resolution" value="3.20 A"/>
    <property type="chains" value="W=10-74"/>
</dbReference>
<dbReference type="PDB" id="7SSW">
    <property type="method" value="EM"/>
    <property type="resolution" value="3.80 A"/>
    <property type="chains" value="W=10-74"/>
</dbReference>
<dbReference type="PDB" id="7ST2">
    <property type="method" value="EM"/>
    <property type="resolution" value="2.90 A"/>
    <property type="chains" value="W=10-74"/>
</dbReference>
<dbReference type="PDB" id="7ST6">
    <property type="method" value="EM"/>
    <property type="resolution" value="3.00 A"/>
    <property type="chains" value="W=10-74"/>
</dbReference>
<dbReference type="PDB" id="7ST7">
    <property type="method" value="EM"/>
    <property type="resolution" value="3.20 A"/>
    <property type="chains" value="W=10-74"/>
</dbReference>
<dbReference type="PDB" id="7TOS">
    <property type="method" value="EM"/>
    <property type="resolution" value="2.90 A"/>
    <property type="chains" value="S18=10-74"/>
</dbReference>
<dbReference type="PDB" id="7UG7">
    <property type="method" value="EM"/>
    <property type="resolution" value="2.58 A"/>
    <property type="chains" value="SR=1-75"/>
</dbReference>
<dbReference type="PDB" id="7UPH">
    <property type="method" value="EM"/>
    <property type="resolution" value="4.18 A"/>
    <property type="chains" value="E=20-74"/>
</dbReference>
<dbReference type="PDB" id="7Y7C">
    <property type="method" value="EM"/>
    <property type="resolution" value="2.51 A"/>
    <property type="chains" value="R=1-75"/>
</dbReference>
<dbReference type="PDB" id="7Y7D">
    <property type="method" value="EM"/>
    <property type="resolution" value="2.58 A"/>
    <property type="chains" value="R=1-75"/>
</dbReference>
<dbReference type="PDB" id="7Y7E">
    <property type="method" value="EM"/>
    <property type="resolution" value="2.41 A"/>
    <property type="chains" value="R=1-75"/>
</dbReference>
<dbReference type="PDB" id="7Y7F">
    <property type="method" value="EM"/>
    <property type="resolution" value="2.43 A"/>
    <property type="chains" value="R=1-75"/>
</dbReference>
<dbReference type="PDB" id="7Y7G">
    <property type="method" value="EM"/>
    <property type="resolution" value="2.34 A"/>
    <property type="chains" value="R=1-75"/>
</dbReference>
<dbReference type="PDB" id="7Y7H">
    <property type="method" value="EM"/>
    <property type="resolution" value="2.51 A"/>
    <property type="chains" value="R=1-75"/>
</dbReference>
<dbReference type="PDB" id="7ZTA">
    <property type="method" value="EM"/>
    <property type="resolution" value="2.70 A"/>
    <property type="chains" value="S181=10-74"/>
</dbReference>
<dbReference type="PDB" id="8A3L">
    <property type="method" value="EM"/>
    <property type="resolution" value="3.42 A"/>
    <property type="chains" value="R=1-75"/>
</dbReference>
<dbReference type="PDB" id="8AKN">
    <property type="method" value="EM"/>
    <property type="resolution" value="2.30 A"/>
    <property type="chains" value="S=1-75"/>
</dbReference>
<dbReference type="PDB" id="8AM9">
    <property type="method" value="EM"/>
    <property type="resolution" value="2.80 A"/>
    <property type="chains" value="S=1-75"/>
</dbReference>
<dbReference type="PDB" id="8AYE">
    <property type="method" value="EM"/>
    <property type="resolution" value="1.96 A"/>
    <property type="chains" value="R=1-75"/>
</dbReference>
<dbReference type="PDB" id="8B0X">
    <property type="method" value="EM"/>
    <property type="resolution" value="1.55 A"/>
    <property type="chains" value="R=1-75"/>
</dbReference>
<dbReference type="PDB" id="8B7Y">
    <property type="method" value="EM"/>
    <property type="resolution" value="3.00 A"/>
    <property type="chains" value="w=1-75"/>
</dbReference>
<dbReference type="PDB" id="8BF7">
    <property type="method" value="EM"/>
    <property type="resolution" value="2.33 A"/>
    <property type="chains" value="v=1-75"/>
</dbReference>
<dbReference type="PDB" id="8BGE">
    <property type="method" value="EM"/>
    <property type="resolution" value="2.11 A"/>
    <property type="chains" value="v=1-75"/>
</dbReference>
<dbReference type="PDB" id="8BGH">
    <property type="method" value="EM"/>
    <property type="resolution" value="2.88 A"/>
    <property type="chains" value="v=1-75"/>
</dbReference>
<dbReference type="PDB" id="8BH4">
    <property type="method" value="EM"/>
    <property type="resolution" value="2.62 A"/>
    <property type="chains" value="v=1-75"/>
</dbReference>
<dbReference type="PDB" id="8BHJ">
    <property type="method" value="EM"/>
    <property type="resolution" value="2.81 A"/>
    <property type="chains" value="v=1-75"/>
</dbReference>
<dbReference type="PDB" id="8BHL">
    <property type="method" value="EM"/>
    <property type="resolution" value="2.21 A"/>
    <property type="chains" value="v=1-75"/>
</dbReference>
<dbReference type="PDB" id="8BHN">
    <property type="method" value="EM"/>
    <property type="resolution" value="2.85 A"/>
    <property type="chains" value="v=1-75"/>
</dbReference>
<dbReference type="PDB" id="8BHP">
    <property type="method" value="EM"/>
    <property type="resolution" value="2.37 A"/>
    <property type="chains" value="v=1-75"/>
</dbReference>
<dbReference type="PDB" id="8BIL">
    <property type="method" value="EM"/>
    <property type="resolution" value="2.04 A"/>
    <property type="chains" value="v=1-75"/>
</dbReference>
<dbReference type="PDB" id="8BIM">
    <property type="method" value="EM"/>
    <property type="resolution" value="2.04 A"/>
    <property type="chains" value="v=1-75"/>
</dbReference>
<dbReference type="PDB" id="8CAI">
    <property type="method" value="EM"/>
    <property type="resolution" value="2.08 A"/>
    <property type="chains" value="R=1-75"/>
</dbReference>
<dbReference type="PDB" id="8CEP">
    <property type="method" value="EM"/>
    <property type="resolution" value="2.04 A"/>
    <property type="chains" value="R=1-75"/>
</dbReference>
<dbReference type="PDB" id="8CGJ">
    <property type="method" value="EM"/>
    <property type="resolution" value="1.79 A"/>
    <property type="chains" value="R=1-75"/>
</dbReference>
<dbReference type="PDB" id="8CGR">
    <property type="method" value="EM"/>
    <property type="resolution" value="2.12 A"/>
    <property type="chains" value="R=1-75"/>
</dbReference>
<dbReference type="PDB" id="8CGU">
    <property type="method" value="EM"/>
    <property type="resolution" value="1.89 A"/>
    <property type="chains" value="R=1-75"/>
</dbReference>
<dbReference type="PDB" id="8EIU">
    <property type="method" value="EM"/>
    <property type="resolution" value="2.24 A"/>
    <property type="chains" value="R=1-75"/>
</dbReference>
<dbReference type="PDB" id="8EKC">
    <property type="method" value="EM"/>
    <property type="resolution" value="2.70 A"/>
    <property type="chains" value="r=1-75"/>
</dbReference>
<dbReference type="PDB" id="8EMM">
    <property type="method" value="EM"/>
    <property type="resolution" value="2.10 A"/>
    <property type="chains" value="R=1-75"/>
</dbReference>
<dbReference type="PDB" id="8EYQ">
    <property type="method" value="EM"/>
    <property type="resolution" value="3.30 A"/>
    <property type="chains" value="R=1-75"/>
</dbReference>
<dbReference type="PDB" id="8EYT">
    <property type="method" value="EM"/>
    <property type="resolution" value="2.80 A"/>
    <property type="chains" value="V=1-75"/>
</dbReference>
<dbReference type="PDB" id="8FIZ">
    <property type="method" value="EM"/>
    <property type="resolution" value="3.80 A"/>
    <property type="chains" value="AT=1-75"/>
</dbReference>
<dbReference type="PDB" id="8FTO">
    <property type="method" value="EM"/>
    <property type="resolution" value="1.85 A"/>
    <property type="chains" value="R=1-75"/>
</dbReference>
<dbReference type="PDB" id="8FZD">
    <property type="method" value="EM"/>
    <property type="resolution" value="3.10 A"/>
    <property type="chains" value="r=1-75"/>
</dbReference>
<dbReference type="PDB" id="8FZE">
    <property type="method" value="EM"/>
    <property type="resolution" value="3.00 A"/>
    <property type="chains" value="r=1-75"/>
</dbReference>
<dbReference type="PDB" id="8FZF">
    <property type="method" value="EM"/>
    <property type="resolution" value="3.20 A"/>
    <property type="chains" value="r=1-75"/>
</dbReference>
<dbReference type="PDB" id="8FZG">
    <property type="method" value="EM"/>
    <property type="resolution" value="3.10 A"/>
    <property type="chains" value="r=1-75"/>
</dbReference>
<dbReference type="PDB" id="8FZH">
    <property type="method" value="EM"/>
    <property type="resolution" value="2.90 A"/>
    <property type="chains" value="r=1-75"/>
</dbReference>
<dbReference type="PDB" id="8FZI">
    <property type="method" value="EM"/>
    <property type="resolution" value="3.10 A"/>
    <property type="chains" value="r=1-75"/>
</dbReference>
<dbReference type="PDB" id="8FZJ">
    <property type="method" value="EM"/>
    <property type="resolution" value="3.00 A"/>
    <property type="chains" value="r=1-75"/>
</dbReference>
<dbReference type="PDB" id="8G2U">
    <property type="method" value="EM"/>
    <property type="resolution" value="3.00 A"/>
    <property type="chains" value="q=20-74"/>
</dbReference>
<dbReference type="PDB" id="8G31">
    <property type="method" value="EM"/>
    <property type="resolution" value="3.20 A"/>
    <property type="chains" value="q=20-74"/>
</dbReference>
<dbReference type="PDB" id="8G34">
    <property type="method" value="EM"/>
    <property type="resolution" value="3.20 A"/>
    <property type="chains" value="q=20-74"/>
</dbReference>
<dbReference type="PDB" id="8G38">
    <property type="method" value="EM"/>
    <property type="resolution" value="3.20 A"/>
    <property type="chains" value="q=20-74"/>
</dbReference>
<dbReference type="PDB" id="8G6W">
    <property type="method" value="EM"/>
    <property type="resolution" value="2.02 A"/>
    <property type="chains" value="R=1-75"/>
</dbReference>
<dbReference type="PDB" id="8G7P">
    <property type="method" value="EM"/>
    <property type="resolution" value="2.90 A"/>
    <property type="chains" value="r=1-75"/>
</dbReference>
<dbReference type="PDB" id="8G7Q">
    <property type="method" value="EM"/>
    <property type="resolution" value="3.10 A"/>
    <property type="chains" value="r=1-75"/>
</dbReference>
<dbReference type="PDB" id="8G7R">
    <property type="method" value="EM"/>
    <property type="resolution" value="2.80 A"/>
    <property type="chains" value="r=1-75"/>
</dbReference>
<dbReference type="PDB" id="8G7S">
    <property type="method" value="EM"/>
    <property type="resolution" value="3.10 A"/>
    <property type="chains" value="r=1-75"/>
</dbReference>
<dbReference type="PDB" id="8GHU">
    <property type="method" value="EM"/>
    <property type="resolution" value="3.00 A"/>
    <property type="chains" value="r=20-74"/>
</dbReference>
<dbReference type="PDB" id="8HSP">
    <property type="method" value="EM"/>
    <property type="resolution" value="2.32 A"/>
    <property type="chains" value="R=1-75"/>
</dbReference>
<dbReference type="PDB" id="8HTZ">
    <property type="method" value="EM"/>
    <property type="resolution" value="2.40 A"/>
    <property type="chains" value="R=1-75"/>
</dbReference>
<dbReference type="PDB" id="8HU1">
    <property type="method" value="EM"/>
    <property type="resolution" value="2.69 A"/>
    <property type="chains" value="R=1-75"/>
</dbReference>
<dbReference type="PDB" id="8IFB">
    <property type="method" value="EM"/>
    <property type="resolution" value="2.43 A"/>
    <property type="chains" value="R=1-75"/>
</dbReference>
<dbReference type="PDB" id="8IFC">
    <property type="method" value="EM"/>
    <property type="resolution" value="2.90 A"/>
    <property type="chains" value="R=1-75"/>
</dbReference>
<dbReference type="PDB" id="8JSG">
    <property type="method" value="EM"/>
    <property type="resolution" value="4.60 A"/>
    <property type="chains" value="1=2-74"/>
</dbReference>
<dbReference type="PDB" id="8JSH">
    <property type="method" value="EM"/>
    <property type="resolution" value="4.40 A"/>
    <property type="chains" value="1=1-75"/>
</dbReference>
<dbReference type="PDB" id="8K3O">
    <property type="method" value="EM"/>
    <property type="resolution" value="3.88 A"/>
    <property type="chains" value="R=1-75"/>
</dbReference>
<dbReference type="PDB" id="8K4E">
    <property type="method" value="EM"/>
    <property type="resolution" value="3.40 A"/>
    <property type="chains" value="R=1-75"/>
</dbReference>
<dbReference type="PDB" id="8P16">
    <property type="method" value="EM"/>
    <property type="resolution" value="2.77 A"/>
    <property type="chains" value="w=1-75"/>
</dbReference>
<dbReference type="PDB" id="8P17">
    <property type="method" value="EM"/>
    <property type="resolution" value="2.78 A"/>
    <property type="chains" value="w=1-75"/>
</dbReference>
<dbReference type="PDB" id="8P18">
    <property type="method" value="EM"/>
    <property type="resolution" value="2.77 A"/>
    <property type="chains" value="w=1-75"/>
</dbReference>
<dbReference type="PDB" id="8PEG">
    <property type="method" value="EM"/>
    <property type="resolution" value="3.30 A"/>
    <property type="chains" value="R=1-75"/>
</dbReference>
<dbReference type="PDB" id="8PHJ">
    <property type="method" value="EM"/>
    <property type="resolution" value="3.67 A"/>
    <property type="chains" value="R=1-75"/>
</dbReference>
<dbReference type="PDB" id="8PKL">
    <property type="method" value="EM"/>
    <property type="resolution" value="3.09 A"/>
    <property type="chains" value="R=1-75"/>
</dbReference>
<dbReference type="PDB" id="8PVA">
    <property type="method" value="EM"/>
    <property type="resolution" value="4.50 A"/>
    <property type="chains" value="R=1-75"/>
</dbReference>
<dbReference type="PDB" id="8Q4F">
    <property type="method" value="EM"/>
    <property type="resolution" value="3.10 A"/>
    <property type="chains" value="R=1-75"/>
</dbReference>
<dbReference type="PDB" id="8QBT">
    <property type="method" value="EM"/>
    <property type="resolution" value="2.20 A"/>
    <property type="chains" value="z=1-75"/>
</dbReference>
<dbReference type="PDB" id="8QK7">
    <property type="method" value="EM"/>
    <property type="resolution" value="2.77 A"/>
    <property type="chains" value="w=1-75"/>
</dbReference>
<dbReference type="PDB" id="8QOA">
    <property type="method" value="EM"/>
    <property type="resolution" value="2.00 A"/>
    <property type="chains" value="R=1-75"/>
</dbReference>
<dbReference type="PDB" id="8R3V">
    <property type="method" value="EM"/>
    <property type="resolution" value="3.28 A"/>
    <property type="chains" value="R1/R2=1-75"/>
</dbReference>
<dbReference type="PDB" id="8R6C">
    <property type="method" value="EM"/>
    <property type="resolution" value="2.20 A"/>
    <property type="chains" value="R=1-75"/>
</dbReference>
<dbReference type="PDB" id="8R8M">
    <property type="method" value="EM"/>
    <property type="resolution" value="2.40 A"/>
    <property type="chains" value="R=1-75"/>
</dbReference>
<dbReference type="PDB" id="8RCL">
    <property type="method" value="EM"/>
    <property type="resolution" value="3.49 A"/>
    <property type="chains" value="R1/R2=1-75"/>
</dbReference>
<dbReference type="PDB" id="8RCM">
    <property type="method" value="EM"/>
    <property type="resolution" value="3.59 A"/>
    <property type="chains" value="R1/R2=1-75"/>
</dbReference>
<dbReference type="PDB" id="8RCS">
    <property type="method" value="EM"/>
    <property type="resolution" value="4.46 A"/>
    <property type="chains" value="R1/R2=1-75"/>
</dbReference>
<dbReference type="PDB" id="8RCT">
    <property type="method" value="EM"/>
    <property type="resolution" value="5.32 A"/>
    <property type="chains" value="R1/R2=1-75"/>
</dbReference>
<dbReference type="PDB" id="8SYL">
    <property type="method" value="EM"/>
    <property type="resolution" value="2.90 A"/>
    <property type="chains" value="r=1-75"/>
</dbReference>
<dbReference type="PDB" id="8T5D">
    <property type="method" value="EM"/>
    <property type="resolution" value="3.20 A"/>
    <property type="chains" value="q=20-74"/>
</dbReference>
<dbReference type="PDB" id="8T5H">
    <property type="method" value="EM"/>
    <property type="resolution" value="3.30 A"/>
    <property type="chains" value="q=20-74"/>
</dbReference>
<dbReference type="PDB" id="8UPO">
    <property type="method" value="EM"/>
    <property type="resolution" value="5.50 A"/>
    <property type="chains" value="C=1-75"/>
</dbReference>
<dbReference type="PDB" id="8UPR">
    <property type="method" value="EM"/>
    <property type="resolution" value="5.30 A"/>
    <property type="chains" value="C=1-75"/>
</dbReference>
<dbReference type="PDB" id="8UQL">
    <property type="method" value="EM"/>
    <property type="resolution" value="3.20 A"/>
    <property type="chains" value="C=1-75"/>
</dbReference>
<dbReference type="PDB" id="8UQM">
    <property type="method" value="EM"/>
    <property type="resolution" value="5.30 A"/>
    <property type="chains" value="C=1-75"/>
</dbReference>
<dbReference type="PDB" id="8UQP">
    <property type="method" value="EM"/>
    <property type="resolution" value="3.80 A"/>
    <property type="chains" value="C=1-75"/>
</dbReference>
<dbReference type="PDB" id="8UR0">
    <property type="method" value="EM"/>
    <property type="resolution" value="3.40 A"/>
    <property type="chains" value="C=1-75"/>
</dbReference>
<dbReference type="PDB" id="8URH">
    <property type="method" value="EM"/>
    <property type="resolution" value="5.70 A"/>
    <property type="chains" value="C=1-75"/>
</dbReference>
<dbReference type="PDB" id="8URI">
    <property type="method" value="EM"/>
    <property type="resolution" value="5.30 A"/>
    <property type="chains" value="C=1-75"/>
</dbReference>
<dbReference type="PDB" id="8URX">
    <property type="method" value="EM"/>
    <property type="resolution" value="6.60 A"/>
    <property type="chains" value="C=1-75"/>
</dbReference>
<dbReference type="PDB" id="8URY">
    <property type="method" value="EM"/>
    <property type="resolution" value="3.10 A"/>
    <property type="chains" value="C=1-75"/>
</dbReference>
<dbReference type="PDB" id="8VS9">
    <property type="method" value="EM"/>
    <property type="resolution" value="3.90 A"/>
    <property type="chains" value="S18=1-75"/>
</dbReference>
<dbReference type="PDB" id="8VSA">
    <property type="method" value="EM"/>
    <property type="resolution" value="3.70 A"/>
    <property type="chains" value="S18=1-75"/>
</dbReference>
<dbReference type="PDB" id="8YUO">
    <property type="method" value="EM"/>
    <property type="resolution" value="2.25 A"/>
    <property type="chains" value="R=1-75"/>
</dbReference>
<dbReference type="PDB" id="8YUP">
    <property type="method" value="EM"/>
    <property type="resolution" value="2.39 A"/>
    <property type="chains" value="R=1-75"/>
</dbReference>
<dbReference type="PDB" id="8YUQ">
    <property type="method" value="EM"/>
    <property type="resolution" value="2.41 A"/>
    <property type="chains" value="R=1-75"/>
</dbReference>
<dbReference type="PDB" id="8YUR">
    <property type="method" value="EM"/>
    <property type="resolution" value="2.47 A"/>
    <property type="chains" value="R=1-75"/>
</dbReference>
<dbReference type="PDB" id="8YUS">
    <property type="method" value="EM"/>
    <property type="resolution" value="2.43 A"/>
    <property type="chains" value="R=1-75"/>
</dbReference>
<dbReference type="PDB" id="9AX8">
    <property type="method" value="EM"/>
    <property type="resolution" value="2.60 A"/>
    <property type="chains" value="r=20-73"/>
</dbReference>
<dbReference type="PDB" id="9DUK">
    <property type="method" value="EM"/>
    <property type="resolution" value="2.56 A"/>
    <property type="chains" value="R=1-75"/>
</dbReference>
<dbReference type="PDB" id="9DUL">
    <property type="method" value="EM"/>
    <property type="resolution" value="2.56 A"/>
    <property type="chains" value="R=1-75"/>
</dbReference>
<dbReference type="PDB" id="9FBV">
    <property type="method" value="EM"/>
    <property type="resolution" value="2.40 A"/>
    <property type="chains" value="R=1-75"/>
</dbReference>
<dbReference type="PDB" id="9GFT">
    <property type="method" value="EM"/>
    <property type="resolution" value="3.10 A"/>
    <property type="chains" value="AQ/K=1-75"/>
</dbReference>
<dbReference type="PDB" id="9GGR">
    <property type="method" value="EM"/>
    <property type="resolution" value="3.20 A"/>
    <property type="chains" value="AQ/K=1-75"/>
</dbReference>
<dbReference type="PDB" id="9GR1">
    <property type="method" value="EM"/>
    <property type="resolution" value="3.17 A"/>
    <property type="chains" value="R=1-75"/>
</dbReference>
<dbReference type="PDB" id="9GUP">
    <property type="method" value="EM"/>
    <property type="resolution" value="2.80 A"/>
    <property type="chains" value="S=1-75"/>
</dbReference>
<dbReference type="PDB" id="9GUQ">
    <property type="method" value="EM"/>
    <property type="resolution" value="3.10 A"/>
    <property type="chains" value="S=1-75"/>
</dbReference>
<dbReference type="PDB" id="9GUS">
    <property type="method" value="EM"/>
    <property type="resolution" value="3.50 A"/>
    <property type="chains" value="S=1-75"/>
</dbReference>
<dbReference type="PDB" id="9GUT">
    <property type="method" value="EM"/>
    <property type="resolution" value="2.80 A"/>
    <property type="chains" value="S=1-75"/>
</dbReference>
<dbReference type="PDB" id="9GUU">
    <property type="method" value="EM"/>
    <property type="resolution" value="2.50 A"/>
    <property type="chains" value="S=1-75"/>
</dbReference>
<dbReference type="PDB" id="9GUV">
    <property type="method" value="EM"/>
    <property type="resolution" value="3.00 A"/>
    <property type="chains" value="S=1-75"/>
</dbReference>
<dbReference type="PDB" id="9GUW">
    <property type="method" value="EM"/>
    <property type="resolution" value="3.10 A"/>
    <property type="chains" value="S=1-75"/>
</dbReference>
<dbReference type="PDB" id="9GUX">
    <property type="method" value="EM"/>
    <property type="resolution" value="3.30 A"/>
    <property type="chains" value="S=1-75"/>
</dbReference>
<dbReference type="PDB" id="9MOR">
    <property type="method" value="EM"/>
    <property type="resolution" value="2.65 A"/>
    <property type="chains" value="w=1-75"/>
</dbReference>
<dbReference type="PDB" id="9MQ4">
    <property type="method" value="EM"/>
    <property type="resolution" value="2.78 A"/>
    <property type="chains" value="w=1-75"/>
</dbReference>
<dbReference type="PDBsum" id="2YKR"/>
<dbReference type="PDBsum" id="3IY8"/>
<dbReference type="PDBsum" id="3J9Y"/>
<dbReference type="PDBsum" id="3J9Z"/>
<dbReference type="PDBsum" id="3JA1"/>
<dbReference type="PDBsum" id="3JBU"/>
<dbReference type="PDBsum" id="3JBV"/>
<dbReference type="PDBsum" id="3JCD"/>
<dbReference type="PDBsum" id="3JCE"/>
<dbReference type="PDBsum" id="3JCJ"/>
<dbReference type="PDBsum" id="3JCN"/>
<dbReference type="PDBsum" id="4A2I"/>
<dbReference type="PDBsum" id="4ADV"/>
<dbReference type="PDBsum" id="4U1U"/>
<dbReference type="PDBsum" id="4U1V"/>
<dbReference type="PDBsum" id="4U20"/>
<dbReference type="PDBsum" id="4U24"/>
<dbReference type="PDBsum" id="4U25"/>
<dbReference type="PDBsum" id="4U26"/>
<dbReference type="PDBsum" id="4U27"/>
<dbReference type="PDBsum" id="4V47"/>
<dbReference type="PDBsum" id="4V48"/>
<dbReference type="PDBsum" id="4V4H"/>
<dbReference type="PDBsum" id="4V4Q"/>
<dbReference type="PDBsum" id="4V4V"/>
<dbReference type="PDBsum" id="4V4W"/>
<dbReference type="PDBsum" id="4V50"/>
<dbReference type="PDBsum" id="4V52"/>
<dbReference type="PDBsum" id="4V53"/>
<dbReference type="PDBsum" id="4V54"/>
<dbReference type="PDBsum" id="4V55"/>
<dbReference type="PDBsum" id="4V56"/>
<dbReference type="PDBsum" id="4V57"/>
<dbReference type="PDBsum" id="4V5B"/>
<dbReference type="PDBsum" id="4V5H"/>
<dbReference type="PDBsum" id="4V5Y"/>
<dbReference type="PDBsum" id="4V64"/>
<dbReference type="PDBsum" id="4V65"/>
<dbReference type="PDBsum" id="4V66"/>
<dbReference type="PDBsum" id="4V69"/>
<dbReference type="PDBsum" id="4V6C"/>
<dbReference type="PDBsum" id="4V6D"/>
<dbReference type="PDBsum" id="4V6E"/>
<dbReference type="PDBsum" id="4V6K"/>
<dbReference type="PDBsum" id="4V6L"/>
<dbReference type="PDBsum" id="4V6M"/>
<dbReference type="PDBsum" id="4V6N"/>
<dbReference type="PDBsum" id="4V6O"/>
<dbReference type="PDBsum" id="4V6P"/>
<dbReference type="PDBsum" id="4V6Q"/>
<dbReference type="PDBsum" id="4V6R"/>
<dbReference type="PDBsum" id="4V6S"/>
<dbReference type="PDBsum" id="4V6T"/>
<dbReference type="PDBsum" id="4V6V"/>
<dbReference type="PDBsum" id="4V6Y"/>
<dbReference type="PDBsum" id="4V6Z"/>
<dbReference type="PDBsum" id="4V70"/>
<dbReference type="PDBsum" id="4V71"/>
<dbReference type="PDBsum" id="4V72"/>
<dbReference type="PDBsum" id="4V73"/>
<dbReference type="PDBsum" id="4V74"/>
<dbReference type="PDBsum" id="4V75"/>
<dbReference type="PDBsum" id="4V76"/>
<dbReference type="PDBsum" id="4V77"/>
<dbReference type="PDBsum" id="4V78"/>
<dbReference type="PDBsum" id="4V79"/>
<dbReference type="PDBsum" id="4V7A"/>
<dbReference type="PDBsum" id="4V7B"/>
<dbReference type="PDBsum" id="4V7C"/>
<dbReference type="PDBsum" id="4V7D"/>
<dbReference type="PDBsum" id="4V7I"/>
<dbReference type="PDBsum" id="4V7S"/>
<dbReference type="PDBsum" id="4V7T"/>
<dbReference type="PDBsum" id="4V7U"/>
<dbReference type="PDBsum" id="4V7V"/>
<dbReference type="PDBsum" id="4V85"/>
<dbReference type="PDBsum" id="4V89"/>
<dbReference type="PDBsum" id="4V9C"/>
<dbReference type="PDBsum" id="4V9D"/>
<dbReference type="PDBsum" id="4V9O"/>
<dbReference type="PDBsum" id="4V9P"/>
<dbReference type="PDBsum" id="4WF1"/>
<dbReference type="PDBsum" id="4WOI"/>
<dbReference type="PDBsum" id="4WWW"/>
<dbReference type="PDBsum" id="4YBB"/>
<dbReference type="PDBsum" id="5AFI"/>
<dbReference type="PDBsum" id="5H5U"/>
<dbReference type="PDBsum" id="5IQR"/>
<dbReference type="PDBsum" id="5IT8"/>
<dbReference type="PDBsum" id="5J5B"/>
<dbReference type="PDBsum" id="5J7L"/>
<dbReference type="PDBsum" id="5J88"/>
<dbReference type="PDBsum" id="5J8A"/>
<dbReference type="PDBsum" id="5J91"/>
<dbReference type="PDBsum" id="5JC9"/>
<dbReference type="PDBsum" id="5JTE"/>
<dbReference type="PDBsum" id="5JU8"/>
<dbReference type="PDBsum" id="5KCR"/>
<dbReference type="PDBsum" id="5KCS"/>
<dbReference type="PDBsum" id="5KPS"/>
<dbReference type="PDBsum" id="5KPV"/>
<dbReference type="PDBsum" id="5KPW"/>
<dbReference type="PDBsum" id="5KPX"/>
<dbReference type="PDBsum" id="5L3P"/>
<dbReference type="PDBsum" id="5LZA"/>
<dbReference type="PDBsum" id="5LZB"/>
<dbReference type="PDBsum" id="5LZC"/>
<dbReference type="PDBsum" id="5LZD"/>
<dbReference type="PDBsum" id="5LZE"/>
<dbReference type="PDBsum" id="5LZF"/>
<dbReference type="PDBsum" id="5MDV"/>
<dbReference type="PDBsum" id="5MDW"/>
<dbReference type="PDBsum" id="5MDY"/>
<dbReference type="PDBsum" id="5MDZ"/>
<dbReference type="PDBsum" id="5ME0"/>
<dbReference type="PDBsum" id="5ME1"/>
<dbReference type="PDBsum" id="5MGP"/>
<dbReference type="PDBsum" id="5MY1"/>
<dbReference type="PDBsum" id="5NO2"/>
<dbReference type="PDBsum" id="5NO3"/>
<dbReference type="PDBsum" id="5NO4"/>
<dbReference type="PDBsum" id="5NP6"/>
<dbReference type="PDBsum" id="5NWY"/>
<dbReference type="PDBsum" id="5O2R"/>
<dbReference type="PDBsum" id="5U4I"/>
<dbReference type="PDBsum" id="5U9F"/>
<dbReference type="PDBsum" id="5U9G"/>
<dbReference type="PDBsum" id="5UYK"/>
<dbReference type="PDBsum" id="5UYL"/>
<dbReference type="PDBsum" id="5UYM"/>
<dbReference type="PDBsum" id="5UYN"/>
<dbReference type="PDBsum" id="5UYP"/>
<dbReference type="PDBsum" id="5UYQ"/>
<dbReference type="PDBsum" id="5UZ4"/>
<dbReference type="PDBsum" id="5WDT"/>
<dbReference type="PDBsum" id="5WE4"/>
<dbReference type="PDBsum" id="5WE6"/>
<dbReference type="PDBsum" id="5WF0"/>
<dbReference type="PDBsum" id="5WFK"/>
<dbReference type="PDBsum" id="5WFS"/>
<dbReference type="PDBsum" id="6AWB"/>
<dbReference type="PDBsum" id="6AWC"/>
<dbReference type="PDBsum" id="6AWD"/>
<dbReference type="PDBsum" id="6BU8"/>
<dbReference type="PDBsum" id="6BY1"/>
<dbReference type="PDBsum" id="6C4I"/>
<dbReference type="PDBsum" id="6DNC"/>
<dbReference type="PDBsum" id="6ENF"/>
<dbReference type="PDBsum" id="6ENJ"/>
<dbReference type="PDBsum" id="6ENU"/>
<dbReference type="PDBsum" id="6GWT"/>
<dbReference type="PDBsum" id="6GXM"/>
<dbReference type="PDBsum" id="6GXN"/>
<dbReference type="PDBsum" id="6GXO"/>
<dbReference type="PDBsum" id="6GXP"/>
<dbReference type="PDBsum" id="6H4N"/>
<dbReference type="PDBsum" id="6H58"/>
<dbReference type="PDBsum" id="6HRM"/>
<dbReference type="PDBsum" id="6I7V"/>
<dbReference type="PDBsum" id="6O7K"/>
<dbReference type="PDBsum" id="6O9J"/>
<dbReference type="PDBsum" id="6O9K"/>
<dbReference type="PDBsum" id="6OFX"/>
<dbReference type="PDBsum" id="6OG7"/>
<dbReference type="PDBsum" id="6OGF"/>
<dbReference type="PDBsum" id="6OGG"/>
<dbReference type="PDBsum" id="6OGI"/>
<dbReference type="PDBsum" id="6OM6"/>
<dbReference type="PDBsum" id="6ORE"/>
<dbReference type="PDBsum" id="6ORL"/>
<dbReference type="PDBsum" id="6OSK"/>
<dbReference type="PDBsum" id="6OSQ"/>
<dbReference type="PDBsum" id="6OST"/>
<dbReference type="PDBsum" id="6OT3"/>
<dbReference type="PDBsum" id="6OUO"/>
<dbReference type="PDBsum" id="6Q97"/>
<dbReference type="PDBsum" id="6Q98"/>
<dbReference type="PDBsum" id="6Q9A"/>
<dbReference type="PDBsum" id="6SZS"/>
<dbReference type="PDBsum" id="6TBV"/>
<dbReference type="PDBsum" id="6TC3"/>
<dbReference type="PDBsum" id="6VU3"/>
<dbReference type="PDBsum" id="6VWL"/>
<dbReference type="PDBsum" id="6VWM"/>
<dbReference type="PDBsum" id="6VWN"/>
<dbReference type="PDBsum" id="6VYQ"/>
<dbReference type="PDBsum" id="6VYR"/>
<dbReference type="PDBsum" id="6VYS"/>
<dbReference type="PDBsum" id="6VYT"/>
<dbReference type="PDBsum" id="6VYU"/>
<dbReference type="PDBsum" id="6VYW"/>
<dbReference type="PDBsum" id="6VYX"/>
<dbReference type="PDBsum" id="6VYY"/>
<dbReference type="PDBsum" id="6VYZ"/>
<dbReference type="PDBsum" id="6VZ2"/>
<dbReference type="PDBsum" id="6VZ3"/>
<dbReference type="PDBsum" id="6VZ5"/>
<dbReference type="PDBsum" id="6VZ7"/>
<dbReference type="PDBsum" id="6VZJ"/>
<dbReference type="PDBsum" id="6W6K"/>
<dbReference type="PDBsum" id="6W77"/>
<dbReference type="PDBsum" id="6W7M"/>
<dbReference type="PDBsum" id="6WD0"/>
<dbReference type="PDBsum" id="6WD1"/>
<dbReference type="PDBsum" id="6WD2"/>
<dbReference type="PDBsum" id="6WD3"/>
<dbReference type="PDBsum" id="6WD4"/>
<dbReference type="PDBsum" id="6WD5"/>
<dbReference type="PDBsum" id="6WD6"/>
<dbReference type="PDBsum" id="6WD7"/>
<dbReference type="PDBsum" id="6WD8"/>
<dbReference type="PDBsum" id="6WD9"/>
<dbReference type="PDBsum" id="6WDA"/>
<dbReference type="PDBsum" id="6WDB"/>
<dbReference type="PDBsum" id="6WDC"/>
<dbReference type="PDBsum" id="6WDD"/>
<dbReference type="PDBsum" id="6WDE"/>
<dbReference type="PDBsum" id="6WDF"/>
<dbReference type="PDBsum" id="6WDG"/>
<dbReference type="PDBsum" id="6WDH"/>
<dbReference type="PDBsum" id="6WDI"/>
<dbReference type="PDBsum" id="6WDJ"/>
<dbReference type="PDBsum" id="6WDK"/>
<dbReference type="PDBsum" id="6WDL"/>
<dbReference type="PDBsum" id="6WDM"/>
<dbReference type="PDBsum" id="6WNV"/>
<dbReference type="PDBsum" id="6WNW"/>
<dbReference type="PDBsum" id="6X6T"/>
<dbReference type="PDBsum" id="6X7F"/>
<dbReference type="PDBsum" id="6X7K"/>
<dbReference type="PDBsum" id="6X9Q"/>
<dbReference type="PDBsum" id="6XDQ"/>
<dbReference type="PDBsum" id="6XDR"/>
<dbReference type="PDBsum" id="6XE0"/>
<dbReference type="PDBsum" id="6XGF"/>
<dbReference type="PDBsum" id="6XII"/>
<dbReference type="PDBsum" id="6XIJ"/>
<dbReference type="PDBsum" id="6XZA"/>
<dbReference type="PDBsum" id="6XZB"/>
<dbReference type="PDBsum" id="6Y69"/>
<dbReference type="PDBsum" id="6ZTJ"/>
<dbReference type="PDBsum" id="6ZTL"/>
<dbReference type="PDBsum" id="6ZTM"/>
<dbReference type="PDBsum" id="6ZTN"/>
<dbReference type="PDBsum" id="6ZTO"/>
<dbReference type="PDBsum" id="6ZTP"/>
<dbReference type="PDBsum" id="6ZU1"/>
<dbReference type="PDBsum" id="7ABZ"/>
<dbReference type="PDBsum" id="7AC7"/>
<dbReference type="PDBsum" id="7ACJ"/>
<dbReference type="PDBsum" id="7ACR"/>
<dbReference type="PDBsum" id="7AFI"/>
<dbReference type="PDBsum" id="7AFL"/>
<dbReference type="PDBsum" id="7AFO"/>
<dbReference type="PDBsum" id="7B5K"/>
<dbReference type="PDBsum" id="7BOD"/>
<dbReference type="PDBsum" id="7BOE"/>
<dbReference type="PDBsum" id="7BOF"/>
<dbReference type="PDBsum" id="7BOG"/>
<dbReference type="PDBsum" id="7BOH"/>
<dbReference type="PDBsum" id="7BOI"/>
<dbReference type="PDBsum" id="7D6Z"/>
<dbReference type="PDBsum" id="7D80"/>
<dbReference type="PDBsum" id="7JSS"/>
<dbReference type="PDBsum" id="7JSW"/>
<dbReference type="PDBsum" id="7JSZ"/>
<dbReference type="PDBsum" id="7JT1"/>
<dbReference type="PDBsum" id="7JT2"/>
<dbReference type="PDBsum" id="7JT3"/>
<dbReference type="PDBsum" id="7K00"/>
<dbReference type="PDBsum" id="7K50"/>
<dbReference type="PDBsum" id="7K51"/>
<dbReference type="PDBsum" id="7K52"/>
<dbReference type="PDBsum" id="7K53"/>
<dbReference type="PDBsum" id="7K54"/>
<dbReference type="PDBsum" id="7K55"/>
<dbReference type="PDBsum" id="7LV0"/>
<dbReference type="PDBsum" id="7M5D"/>
<dbReference type="PDBsum" id="7N1P"/>
<dbReference type="PDBsum" id="7N2C"/>
<dbReference type="PDBsum" id="7N2U"/>
<dbReference type="PDBsum" id="7N2V"/>
<dbReference type="PDBsum" id="7N30"/>
<dbReference type="PDBsum" id="7N31"/>
<dbReference type="PDBsum" id="7NAR"/>
<dbReference type="PDBsum" id="7NAS"/>
<dbReference type="PDBsum" id="7NAT"/>
<dbReference type="PDBsum" id="7NAU"/>
<dbReference type="PDBsum" id="7NAV"/>
<dbReference type="PDBsum" id="7NAX"/>
<dbReference type="PDBsum" id="7NBU"/>
<dbReference type="PDBsum" id="7O19"/>
<dbReference type="PDBsum" id="7O1A"/>
<dbReference type="PDBsum" id="7O1C"/>
<dbReference type="PDBsum" id="7O5H"/>
<dbReference type="PDBsum" id="7OE0"/>
<dbReference type="PDBsum" id="7OE1"/>
<dbReference type="PDBsum" id="7OI0"/>
<dbReference type="PDBsum" id="7OIZ"/>
<dbReference type="PDBsum" id="7OJ0"/>
<dbReference type="PDBsum" id="7P3K"/>
<dbReference type="PDBsum" id="7PJU"/>
<dbReference type="PDBsum" id="7PJY"/>
<dbReference type="PDBsum" id="7QG8"/>
<dbReference type="PDBsum" id="7QGH"/>
<dbReference type="PDBsum" id="7S1G"/>
<dbReference type="PDBsum" id="7S1H"/>
<dbReference type="PDBsum" id="7S1I"/>
<dbReference type="PDBsum" id="7S1J"/>
<dbReference type="PDBsum" id="7S1K"/>
<dbReference type="PDBsum" id="7SA4"/>
<dbReference type="PDBsum" id="7SS9"/>
<dbReference type="PDBsum" id="7SSD"/>
<dbReference type="PDBsum" id="7SSL"/>
<dbReference type="PDBsum" id="7SSN"/>
<dbReference type="PDBsum" id="7SSO"/>
<dbReference type="PDBsum" id="7SSW"/>
<dbReference type="PDBsum" id="7ST2"/>
<dbReference type="PDBsum" id="7ST6"/>
<dbReference type="PDBsum" id="7ST7"/>
<dbReference type="PDBsum" id="7TOS"/>
<dbReference type="PDBsum" id="7UG7"/>
<dbReference type="PDBsum" id="7UPH"/>
<dbReference type="PDBsum" id="7Y7C"/>
<dbReference type="PDBsum" id="7Y7D"/>
<dbReference type="PDBsum" id="7Y7E"/>
<dbReference type="PDBsum" id="7Y7F"/>
<dbReference type="PDBsum" id="7Y7G"/>
<dbReference type="PDBsum" id="7Y7H"/>
<dbReference type="PDBsum" id="7ZTA"/>
<dbReference type="PDBsum" id="8A3L"/>
<dbReference type="PDBsum" id="8AKN"/>
<dbReference type="PDBsum" id="8AM9"/>
<dbReference type="PDBsum" id="8AYE"/>
<dbReference type="PDBsum" id="8B0X"/>
<dbReference type="PDBsum" id="8B7Y"/>
<dbReference type="PDBsum" id="8BF7"/>
<dbReference type="PDBsum" id="8BGE"/>
<dbReference type="PDBsum" id="8BGH"/>
<dbReference type="PDBsum" id="8BH4"/>
<dbReference type="PDBsum" id="8BHJ"/>
<dbReference type="PDBsum" id="8BHL"/>
<dbReference type="PDBsum" id="8BHN"/>
<dbReference type="PDBsum" id="8BHP"/>
<dbReference type="PDBsum" id="8BIL"/>
<dbReference type="PDBsum" id="8BIM"/>
<dbReference type="PDBsum" id="8CAI"/>
<dbReference type="PDBsum" id="8CEP"/>
<dbReference type="PDBsum" id="8CGJ"/>
<dbReference type="PDBsum" id="8CGR"/>
<dbReference type="PDBsum" id="8CGU"/>
<dbReference type="PDBsum" id="8EIU"/>
<dbReference type="PDBsum" id="8EKC"/>
<dbReference type="PDBsum" id="8EMM"/>
<dbReference type="PDBsum" id="8EYQ"/>
<dbReference type="PDBsum" id="8EYT"/>
<dbReference type="PDBsum" id="8FIZ"/>
<dbReference type="PDBsum" id="8FTO"/>
<dbReference type="PDBsum" id="8FZD"/>
<dbReference type="PDBsum" id="8FZE"/>
<dbReference type="PDBsum" id="8FZF"/>
<dbReference type="PDBsum" id="8FZG"/>
<dbReference type="PDBsum" id="8FZH"/>
<dbReference type="PDBsum" id="8FZI"/>
<dbReference type="PDBsum" id="8FZJ"/>
<dbReference type="PDBsum" id="8G2U"/>
<dbReference type="PDBsum" id="8G31"/>
<dbReference type="PDBsum" id="8G34"/>
<dbReference type="PDBsum" id="8G38"/>
<dbReference type="PDBsum" id="8G6W"/>
<dbReference type="PDBsum" id="8G7P"/>
<dbReference type="PDBsum" id="8G7Q"/>
<dbReference type="PDBsum" id="8G7R"/>
<dbReference type="PDBsum" id="8G7S"/>
<dbReference type="PDBsum" id="8GHU"/>
<dbReference type="PDBsum" id="8HSP"/>
<dbReference type="PDBsum" id="8HTZ"/>
<dbReference type="PDBsum" id="8HU1"/>
<dbReference type="PDBsum" id="8IFB"/>
<dbReference type="PDBsum" id="8IFC"/>
<dbReference type="PDBsum" id="8JSG"/>
<dbReference type="PDBsum" id="8JSH"/>
<dbReference type="PDBsum" id="8K3O"/>
<dbReference type="PDBsum" id="8K4E"/>
<dbReference type="PDBsum" id="8P16"/>
<dbReference type="PDBsum" id="8P17"/>
<dbReference type="PDBsum" id="8P18"/>
<dbReference type="PDBsum" id="8PEG"/>
<dbReference type="PDBsum" id="8PHJ"/>
<dbReference type="PDBsum" id="8PKL"/>
<dbReference type="PDBsum" id="8PVA"/>
<dbReference type="PDBsum" id="8Q4F"/>
<dbReference type="PDBsum" id="8QBT"/>
<dbReference type="PDBsum" id="8QK7"/>
<dbReference type="PDBsum" id="8QOA"/>
<dbReference type="PDBsum" id="8R3V"/>
<dbReference type="PDBsum" id="8R6C"/>
<dbReference type="PDBsum" id="8R8M"/>
<dbReference type="PDBsum" id="8RCL"/>
<dbReference type="PDBsum" id="8RCM"/>
<dbReference type="PDBsum" id="8RCS"/>
<dbReference type="PDBsum" id="8RCT"/>
<dbReference type="PDBsum" id="8SYL"/>
<dbReference type="PDBsum" id="8T5D"/>
<dbReference type="PDBsum" id="8T5H"/>
<dbReference type="PDBsum" id="8UPO"/>
<dbReference type="PDBsum" id="8UPR"/>
<dbReference type="PDBsum" id="8UQL"/>
<dbReference type="PDBsum" id="8UQM"/>
<dbReference type="PDBsum" id="8UQP"/>
<dbReference type="PDBsum" id="8UR0"/>
<dbReference type="PDBsum" id="8URH"/>
<dbReference type="PDBsum" id="8URI"/>
<dbReference type="PDBsum" id="8URX"/>
<dbReference type="PDBsum" id="8URY"/>
<dbReference type="PDBsum" id="8VS9"/>
<dbReference type="PDBsum" id="8VSA"/>
<dbReference type="PDBsum" id="8YUO"/>
<dbReference type="PDBsum" id="8YUP"/>
<dbReference type="PDBsum" id="8YUQ"/>
<dbReference type="PDBsum" id="8YUR"/>
<dbReference type="PDBsum" id="8YUS"/>
<dbReference type="PDBsum" id="9AX8"/>
<dbReference type="PDBsum" id="9DUK"/>
<dbReference type="PDBsum" id="9DUL"/>
<dbReference type="PDBsum" id="9FBV"/>
<dbReference type="PDBsum" id="9GFT"/>
<dbReference type="PDBsum" id="9GGR"/>
<dbReference type="PDBsum" id="9GR1"/>
<dbReference type="PDBsum" id="9GUP"/>
<dbReference type="PDBsum" id="9GUQ"/>
<dbReference type="PDBsum" id="9GUS"/>
<dbReference type="PDBsum" id="9GUT"/>
<dbReference type="PDBsum" id="9GUU"/>
<dbReference type="PDBsum" id="9GUV"/>
<dbReference type="PDBsum" id="9GUW"/>
<dbReference type="PDBsum" id="9GUX"/>
<dbReference type="PDBsum" id="9MOR"/>
<dbReference type="PDBsum" id="9MQ4"/>
<dbReference type="EMDB" id="EMD-0076"/>
<dbReference type="EMDB" id="EMD-0080"/>
<dbReference type="EMDB" id="EMD-0081"/>
<dbReference type="EMDB" id="EMD-0082"/>
<dbReference type="EMDB" id="EMD-0083"/>
<dbReference type="EMDB" id="EMD-0137"/>
<dbReference type="EMDB" id="EMD-0139"/>
<dbReference type="EMDB" id="EMD-0261"/>
<dbReference type="EMDB" id="EMD-10353"/>
<dbReference type="EMDB" id="EMD-10453"/>
<dbReference type="EMDB" id="EMD-10458"/>
<dbReference type="EMDB" id="EMD-10656"/>
<dbReference type="EMDB" id="EMD-10657"/>
<dbReference type="EMDB" id="EMD-10705"/>
<dbReference type="EMDB" id="EMD-11419"/>
<dbReference type="EMDB" id="EMD-11710"/>
<dbReference type="EMDB" id="EMD-11713"/>
<dbReference type="EMDB" id="EMD-11717"/>
<dbReference type="EMDB" id="EMD-11718"/>
<dbReference type="EMDB" id="EMD-12035"/>
<dbReference type="EMDB" id="EMD-12239"/>
<dbReference type="EMDB" id="EMD-12240"/>
<dbReference type="EMDB" id="EMD-12241"/>
<dbReference type="EMDB" id="EMD-12242"/>
<dbReference type="EMDB" id="EMD-12243"/>
<dbReference type="EMDB" id="EMD-12244"/>
<dbReference type="EMDB" id="EMD-12245"/>
<dbReference type="EMDB" id="EMD-12246"/>
<dbReference type="EMDB" id="EMD-12247"/>
<dbReference type="EMDB" id="EMD-12248"/>
<dbReference type="EMDB" id="EMD-12249"/>
<dbReference type="EMDB" id="EMD-12261"/>
<dbReference type="EMDB" id="EMD-12693"/>
<dbReference type="EMDB" id="EMD-12694"/>
<dbReference type="EMDB" id="EMD-12695"/>
<dbReference type="EMDB" id="EMD-12936"/>
<dbReference type="EMDB" id="EMD-12937"/>
<dbReference type="EMDB" id="EMD-13180"/>
<dbReference type="EMDB" id="EMD-13464"/>
<dbReference type="EMDB" id="EMD-13952"/>
<dbReference type="EMDB" id="EMD-13955"/>
<dbReference type="EMDB" id="EMD-14956"/>
<dbReference type="EMDB" id="EMD-15116"/>
<dbReference type="EMDB" id="EMD-15712"/>
<dbReference type="EMDB" id="EMD-15793"/>
<dbReference type="EMDB" id="EMD-15905"/>
<dbReference type="EMDB" id="EMD-16015"/>
<dbReference type="EMDB" id="EMD-16029"/>
<dbReference type="EMDB" id="EMD-16031"/>
<dbReference type="EMDB" id="EMD-16047"/>
<dbReference type="EMDB" id="EMD-16057"/>
<dbReference type="EMDB" id="EMD-16059"/>
<dbReference type="EMDB" id="EMD-16062"/>
<dbReference type="EMDB" id="EMD-16065"/>
<dbReference type="EMDB" id="EMD-16081"/>
<dbReference type="EMDB" id="EMD-16082"/>
<dbReference type="EMDB" id="EMD-16526"/>
<dbReference type="EMDB" id="EMD-16612"/>
<dbReference type="EMDB" id="EMD-16645"/>
<dbReference type="EMDB" id="EMD-16650"/>
<dbReference type="EMDB" id="EMD-16651"/>
<dbReference type="EMDB" id="EMD-17346"/>
<dbReference type="EMDB" id="EMD-17347"/>
<dbReference type="EMDB" id="EMD-17348"/>
<dbReference type="EMDB" id="EMD-17631"/>
<dbReference type="EMDB" id="EMD-17667"/>
<dbReference type="EMDB" id="EMD-17743"/>
<dbReference type="EMDB" id="EMD-17959"/>
<dbReference type="EMDB" id="EMD-18145"/>
<dbReference type="EMDB" id="EMD-18320"/>
<dbReference type="EMDB" id="EMD-18458"/>
<dbReference type="EMDB" id="EMD-18534"/>
<dbReference type="EMDB" id="EMD-18875"/>
<dbReference type="EMDB" id="EMD-18950"/>
<dbReference type="EMDB" id="EMD-19004"/>
<dbReference type="EMDB" id="EMD-19054"/>
<dbReference type="EMDB" id="EMD-19055"/>
<dbReference type="EMDB" id="EMD-19058"/>
<dbReference type="EMDB" id="EMD-19059"/>
<dbReference type="EMDB" id="EMD-20048"/>
<dbReference type="EMDB" id="EMD-20052"/>
<dbReference type="EMDB" id="EMD-21420"/>
<dbReference type="EMDB" id="EMD-21421"/>
<dbReference type="EMDB" id="EMD-21422"/>
<dbReference type="EMDB" id="EMD-21558"/>
<dbReference type="EMDB" id="EMD-21569"/>
<dbReference type="EMDB" id="EMD-21571"/>
<dbReference type="EMDB" id="EMD-21620"/>
<dbReference type="EMDB" id="EMD-21625"/>
<dbReference type="EMDB" id="EMD-21630"/>
<dbReference type="EMDB" id="EMD-21631"/>
<dbReference type="EMDB" id="EMD-21632"/>
<dbReference type="EMDB" id="EMD-21633"/>
<dbReference type="EMDB" id="EMD-21634"/>
<dbReference type="EMDB" id="EMD-21635"/>
<dbReference type="EMDB" id="EMD-21636"/>
<dbReference type="EMDB" id="EMD-21637"/>
<dbReference type="EMDB" id="EMD-21638"/>
<dbReference type="EMDB" id="EMD-21639"/>
<dbReference type="EMDB" id="EMD-21640"/>
<dbReference type="EMDB" id="EMD-21641"/>
<dbReference type="EMDB" id="EMD-21857"/>
<dbReference type="EMDB" id="EMD-21858"/>
<dbReference type="EMDB" id="EMD-22143"/>
<dbReference type="EMDB" id="EMD-22459"/>
<dbReference type="EMDB" id="EMD-22461"/>
<dbReference type="EMDB" id="EMD-22464"/>
<dbReference type="EMDB" id="EMD-22466"/>
<dbReference type="EMDB" id="EMD-22469"/>
<dbReference type="EMDB" id="EMD-22472"/>
<dbReference type="EMDB" id="EMD-22669"/>
<dbReference type="EMDB" id="EMD-22670"/>
<dbReference type="EMDB" id="EMD-22671"/>
<dbReference type="EMDB" id="EMD-22672"/>
<dbReference type="EMDB" id="EMD-22673"/>
<dbReference type="EMDB" id="EMD-22674"/>
<dbReference type="EMDB" id="EMD-23528"/>
<dbReference type="EMDB" id="EMD-24120"/>
<dbReference type="EMDB" id="EMD-24132"/>
<dbReference type="EMDB" id="EMD-24133"/>
<dbReference type="EMDB" id="EMD-24134"/>
<dbReference type="EMDB" id="EMD-24135"/>
<dbReference type="EMDB" id="EMD-24136"/>
<dbReference type="EMDB" id="EMD-24803"/>
<dbReference type="EMDB" id="EMD-25405"/>
<dbReference type="EMDB" id="EMD-25407"/>
<dbReference type="EMDB" id="EMD-25409"/>
<dbReference type="EMDB" id="EMD-25410"/>
<dbReference type="EMDB" id="EMD-25411"/>
<dbReference type="EMDB" id="EMD-25415"/>
<dbReference type="EMDB" id="EMD-25418"/>
<dbReference type="EMDB" id="EMD-25420"/>
<dbReference type="EMDB" id="EMD-25421"/>
<dbReference type="EMDB" id="EMD-30598"/>
<dbReference type="EMDB" id="EMD-30611"/>
<dbReference type="EMDB" id="EMD-33660"/>
<dbReference type="EMDB" id="EMD-33661"/>
<dbReference type="EMDB" id="EMD-33662"/>
<dbReference type="EMDB" id="EMD-33663"/>
<dbReference type="EMDB" id="EMD-33664"/>
<dbReference type="EMDB" id="EMD-33665"/>
<dbReference type="EMDB" id="EMD-3489"/>
<dbReference type="EMDB" id="EMD-3490"/>
<dbReference type="EMDB" id="EMD-3492"/>
<dbReference type="EMDB" id="EMD-3493"/>
<dbReference type="EMDB" id="EMD-3494"/>
<dbReference type="EMDB" id="EMD-3495"/>
<dbReference type="EMDB" id="EMD-35001"/>
<dbReference type="EMDB" id="EMD-35020"/>
<dbReference type="EMDB" id="EMD-35022"/>
<dbReference type="EMDB" id="EMD-3508"/>
<dbReference type="EMDB" id="EMD-35411"/>
<dbReference type="EMDB" id="EMD-35412"/>
<dbReference type="EMDB" id="EMD-3580"/>
<dbReference type="EMDB" id="EMD-3661"/>
<dbReference type="EMDB" id="EMD-36619"/>
<dbReference type="EMDB" id="EMD-3662"/>
<dbReference type="EMDB" id="EMD-36620"/>
<dbReference type="EMDB" id="EMD-3663"/>
<dbReference type="EMDB" id="EMD-36854"/>
<dbReference type="EMDB" id="EMD-36883"/>
<dbReference type="EMDB" id="EMD-3713"/>
<dbReference type="EMDB" id="EMD-3730"/>
<dbReference type="EMDB" id="EMD-3898"/>
<dbReference type="EMDB" id="EMD-3899"/>
<dbReference type="EMDB" id="EMD-3903"/>
<dbReference type="EMDB" id="EMD-39577"/>
<dbReference type="EMDB" id="EMD-39578"/>
<dbReference type="EMDB" id="EMD-39579"/>
<dbReference type="EMDB" id="EMD-39580"/>
<dbReference type="EMDB" id="EMD-39581"/>
<dbReference type="EMDB" id="EMD-4001"/>
<dbReference type="EMDB" id="EMD-4121"/>
<dbReference type="EMDB" id="EMD-4122"/>
<dbReference type="EMDB" id="EMD-4123"/>
<dbReference type="EMDB" id="EMD-4124"/>
<dbReference type="EMDB" id="EMD-4125"/>
<dbReference type="EMDB" id="EMD-4126"/>
<dbReference type="EMDB" id="EMD-4476"/>
<dbReference type="EMDB" id="EMD-4477"/>
<dbReference type="EMDB" id="EMD-4478"/>
<dbReference type="EMDB" id="EMD-50296"/>
<dbReference type="EMDB" id="EMD-51318"/>
<dbReference type="EMDB" id="EMD-51340"/>
<dbReference type="EMDB" id="EMD-51615"/>
<dbReference type="EMDB" id="EMD-51616"/>
<dbReference type="EMDB" id="EMD-51618"/>
<dbReference type="EMDB" id="EMD-51619"/>
<dbReference type="EMDB" id="EMD-51620"/>
<dbReference type="EMDB" id="EMD-51621"/>
<dbReference type="EMDB" id="EMD-51622"/>
<dbReference type="EMDB" id="EMD-51623"/>
<dbReference type="EMDB" id="EMD-6667"/>
<dbReference type="EMDB" id="EMD-7289"/>
<dbReference type="EMDB" id="EMD-7341"/>
<dbReference type="EMDB" id="EMD-8107"/>
<dbReference type="EMDB" id="EMD-8175"/>
<dbReference type="EMDB" id="EMD-8176"/>
<dbReference type="EMDB" id="EMD-8237"/>
<dbReference type="EMDB" id="EMD-8238"/>
<dbReference type="EMDB" id="EMD-8279"/>
<dbReference type="EMDB" id="EMD-8280"/>
<dbReference type="EMDB" id="EMD-8281"/>
<dbReference type="EMDB" id="EMD-8282"/>
<dbReference type="EMDB" id="EMD-8505"/>
<dbReference type="EMDB" id="EMD-8615"/>
<dbReference type="EMDB" id="EMD-8616"/>
<dbReference type="EMDB" id="EMD-8617"/>
<dbReference type="EMDB" id="EMD-8618"/>
<dbReference type="EMDB" id="EMD-8619"/>
<dbReference type="EMDB" id="EMD-8620"/>
<dbReference type="EMDB" id="EMD-8813"/>
<dbReference type="EMDB" id="EMD-8814"/>
<dbReference type="EMDB" id="EMD-8815"/>
<dbReference type="EMDB" id="EMD-8828"/>
<dbReference type="SMR" id="P0A7T7"/>
<dbReference type="BioGRID" id="4259634">
    <property type="interactions" value="9"/>
</dbReference>
<dbReference type="BioGRID" id="853013">
    <property type="interactions" value="3"/>
</dbReference>
<dbReference type="ComplexPortal" id="CPX-3802">
    <property type="entry name" value="30S small ribosomal subunit"/>
</dbReference>
<dbReference type="DIP" id="DIP-47889N"/>
<dbReference type="FunCoup" id="P0A7T7">
    <property type="interactions" value="886"/>
</dbReference>
<dbReference type="IntAct" id="P0A7T7">
    <property type="interactions" value="45"/>
</dbReference>
<dbReference type="STRING" id="511145.b4202"/>
<dbReference type="ChEMBL" id="CHEMBL2363090"/>
<dbReference type="iPTMnet" id="P0A7T7"/>
<dbReference type="jPOST" id="P0A7T7"/>
<dbReference type="PaxDb" id="511145-b4202"/>
<dbReference type="EnsemblBacteria" id="AAC77159">
    <property type="protein sequence ID" value="AAC77159"/>
    <property type="gene ID" value="b4202"/>
</dbReference>
<dbReference type="GeneID" id="948721"/>
<dbReference type="GeneID" id="98186237"/>
<dbReference type="KEGG" id="ecj:JW4160"/>
<dbReference type="KEGG" id="eco:b4202"/>
<dbReference type="KEGG" id="ecoc:C3026_22700"/>
<dbReference type="PATRIC" id="fig|1411691.4.peg.2499"/>
<dbReference type="EchoBASE" id="EB0910"/>
<dbReference type="eggNOG" id="COG0238">
    <property type="taxonomic scope" value="Bacteria"/>
</dbReference>
<dbReference type="HOGENOM" id="CLU_148710_2_3_6"/>
<dbReference type="InParanoid" id="P0A7T7"/>
<dbReference type="OMA" id="QKKYCRF"/>
<dbReference type="OrthoDB" id="9812008at2"/>
<dbReference type="PhylomeDB" id="P0A7T7"/>
<dbReference type="BioCyc" id="EcoCyc:EG10917-MONOMER"/>
<dbReference type="BioCyc" id="MetaCyc:EG10917-MONOMER"/>
<dbReference type="EvolutionaryTrace" id="P0A7T7"/>
<dbReference type="PRO" id="PR:P0A7T7"/>
<dbReference type="Proteomes" id="UP000000625">
    <property type="component" value="Chromosome"/>
</dbReference>
<dbReference type="GO" id="GO:0005737">
    <property type="term" value="C:cytoplasm"/>
    <property type="evidence" value="ECO:0000314"/>
    <property type="project" value="ComplexPortal"/>
</dbReference>
<dbReference type="GO" id="GO:0005829">
    <property type="term" value="C:cytosol"/>
    <property type="evidence" value="ECO:0000314"/>
    <property type="project" value="EcoCyc"/>
</dbReference>
<dbReference type="GO" id="GO:0022627">
    <property type="term" value="C:cytosolic small ribosomal subunit"/>
    <property type="evidence" value="ECO:0000314"/>
    <property type="project" value="EcoCyc"/>
</dbReference>
<dbReference type="GO" id="GO:0048027">
    <property type="term" value="F:mRNA 5'-UTR binding"/>
    <property type="evidence" value="ECO:0000314"/>
    <property type="project" value="EcoCyc"/>
</dbReference>
<dbReference type="GO" id="GO:0070181">
    <property type="term" value="F:small ribosomal subunit rRNA binding"/>
    <property type="evidence" value="ECO:0000314"/>
    <property type="project" value="EcoCyc"/>
</dbReference>
<dbReference type="GO" id="GO:0003735">
    <property type="term" value="F:structural constituent of ribosome"/>
    <property type="evidence" value="ECO:0000314"/>
    <property type="project" value="CAFA"/>
</dbReference>
<dbReference type="GO" id="GO:0002181">
    <property type="term" value="P:cytoplasmic translation"/>
    <property type="evidence" value="ECO:0000303"/>
    <property type="project" value="ComplexPortal"/>
</dbReference>
<dbReference type="GO" id="GO:0006412">
    <property type="term" value="P:translation"/>
    <property type="evidence" value="ECO:0000318"/>
    <property type="project" value="GO_Central"/>
</dbReference>
<dbReference type="FunFam" id="4.10.640.10:FF:000001">
    <property type="entry name" value="30S ribosomal protein S18"/>
    <property type="match status" value="1"/>
</dbReference>
<dbReference type="Gene3D" id="4.10.640.10">
    <property type="entry name" value="Ribosomal protein S18"/>
    <property type="match status" value="1"/>
</dbReference>
<dbReference type="HAMAP" id="MF_00270">
    <property type="entry name" value="Ribosomal_bS18"/>
    <property type="match status" value="1"/>
</dbReference>
<dbReference type="InterPro" id="IPR001648">
    <property type="entry name" value="Ribosomal_bS18"/>
</dbReference>
<dbReference type="InterPro" id="IPR018275">
    <property type="entry name" value="Ribosomal_bS18_CS"/>
</dbReference>
<dbReference type="InterPro" id="IPR036870">
    <property type="entry name" value="Ribosomal_bS18_sf"/>
</dbReference>
<dbReference type="NCBIfam" id="TIGR00165">
    <property type="entry name" value="S18"/>
    <property type="match status" value="1"/>
</dbReference>
<dbReference type="PANTHER" id="PTHR13479">
    <property type="entry name" value="30S RIBOSOMAL PROTEIN S18"/>
    <property type="match status" value="1"/>
</dbReference>
<dbReference type="PANTHER" id="PTHR13479:SF40">
    <property type="entry name" value="SMALL RIBOSOMAL SUBUNIT PROTEIN BS18M"/>
    <property type="match status" value="1"/>
</dbReference>
<dbReference type="Pfam" id="PF01084">
    <property type="entry name" value="Ribosomal_S18"/>
    <property type="match status" value="1"/>
</dbReference>
<dbReference type="PRINTS" id="PR00974">
    <property type="entry name" value="RIBOSOMALS18"/>
</dbReference>
<dbReference type="SUPFAM" id="SSF46911">
    <property type="entry name" value="Ribosomal protein S18"/>
    <property type="match status" value="1"/>
</dbReference>
<dbReference type="PROSITE" id="PS00057">
    <property type="entry name" value="RIBOSOMAL_S18"/>
    <property type="match status" value="1"/>
</dbReference>
<organism>
    <name type="scientific">Escherichia coli (strain K12)</name>
    <dbReference type="NCBI Taxonomy" id="83333"/>
    <lineage>
        <taxon>Bacteria</taxon>
        <taxon>Pseudomonadati</taxon>
        <taxon>Pseudomonadota</taxon>
        <taxon>Gammaproteobacteria</taxon>
        <taxon>Enterobacterales</taxon>
        <taxon>Enterobacteriaceae</taxon>
        <taxon>Escherichia</taxon>
    </lineage>
</organism>
<feature type="initiator methionine" description="Removed" evidence="7">
    <location>
        <position position="1"/>
    </location>
</feature>
<feature type="chain" id="PRO_0000111153" description="Small ribosomal subunit protein bS18">
    <location>
        <begin position="2"/>
        <end position="75"/>
    </location>
</feature>
<feature type="modified residue" description="N-acetylalanine" evidence="7">
    <location>
        <position position="2"/>
    </location>
</feature>
<feature type="sequence conflict" description="In Ref. 5; AA sequence." evidence="9" ref="5">
    <original>K</original>
    <variation>E</variation>
    <location>
        <position position="24"/>
    </location>
</feature>
<feature type="helix" evidence="10">
    <location>
        <begin position="12"/>
        <end position="15"/>
    </location>
</feature>
<feature type="helix" evidence="10">
    <location>
        <begin position="26"/>
        <end position="29"/>
    </location>
</feature>
<feature type="helix" evidence="10">
    <location>
        <begin position="30"/>
        <end position="32"/>
    </location>
</feature>
<feature type="strand" evidence="11">
    <location>
        <begin position="35"/>
        <end position="37"/>
    </location>
</feature>
<feature type="helix" evidence="10">
    <location>
        <begin position="42"/>
        <end position="45"/>
    </location>
</feature>
<feature type="helix" evidence="10">
    <location>
        <begin position="49"/>
        <end position="64"/>
    </location>
</feature>
<feature type="strand" evidence="10">
    <location>
        <begin position="70"/>
        <end position="72"/>
    </location>
</feature>